<protein>
    <recommendedName>
        <fullName evidence="26">Serotransferrin</fullName>
        <shortName>Transferrin</shortName>
    </recommendedName>
    <alternativeName>
        <fullName>Beta-1 metal-binding globulin</fullName>
    </alternativeName>
    <alternativeName>
        <fullName>Siderophilin</fullName>
    </alternativeName>
</protein>
<sequence length="698" mass="77064">MRLAVGALLVCAVLGLCLAVPDKTVRWCAVSEHEATKCQSFRDHMKSVIPSDGPSVACVKKASYLDCIRAIAANEADAVTLDAGLVYDAYLAPNNLKPVVAEFYGSKEDPQTFYYAVAVVKKDSGFQMNQLRGKKSCHTGLGRSAGWNIPIGLLYCDLPEPRKPLEKAVANFFSGSCAPCADGTDFPQLCQLCPGCGCSTLNQYFGYSGAFKCLKDGAGDVAFVKHSTIFENLANKADRDQYELLCLDNTRKPVDEYKDCHLAQVPSHTVVARSMGGKEDLIWELLNQAQEHFGKDKSKEFQLFSSPHGKDLLFKDSAHGFLKVPPRMDAKMYLGYEYVTAIRNLREGTCPEAPTDECKPVKWCALSHHERLKCDEWSVNSVGKIECVSAETTEDCIAKIMNGEADAMSLDGGFVYIAGKCGLVPVLAENYNKSDNCEDTPEAGYFAIAVVKKSASDLTWDNLKGKKSCHTAVGRTAGWNIPMGLLYNKINHCRFDEFFSEGCAPGSKKDSSLCKLCMGSGLNLCEPNNKEGYYGYTGAFRCLVEKGDVAFVKHQTVPQNTGGKNPDPWAKNLNEKDYELLCLDGTRKPVEEYANCHLARAPNHAVVTRKDKEACVHKILRQQQHLFGSNVTDCSGNFCLFRSETKDLLFRDDTVCLAKLHDRNTYEKYLGEEYVKAVGNLRKCSTSSLLEACTFRRP</sequence>
<name>TRFE_HUMAN</name>
<feature type="signal peptide" evidence="20">
    <location>
        <begin position="1"/>
        <end position="19"/>
    </location>
</feature>
<feature type="chain" id="PRO_0000035715" description="Serotransferrin">
    <location>
        <begin position="20"/>
        <end position="698"/>
    </location>
</feature>
<feature type="domain" description="Transferrin-like 1" evidence="2">
    <location>
        <begin position="25"/>
        <end position="347"/>
    </location>
</feature>
<feature type="domain" description="Transferrin-like 2" evidence="2">
    <location>
        <begin position="361"/>
        <end position="683"/>
    </location>
</feature>
<feature type="binding site" evidence="15 30">
    <location>
        <position position="82"/>
    </location>
    <ligand>
        <name>Fe(3+)</name>
        <dbReference type="ChEBI" id="CHEBI:29034"/>
        <label>1</label>
    </ligand>
</feature>
<feature type="binding site" evidence="15 30">
    <location>
        <position position="114"/>
    </location>
    <ligand>
        <name>Fe(3+)</name>
        <dbReference type="ChEBI" id="CHEBI:29034"/>
        <label>1</label>
    </ligand>
</feature>
<feature type="binding site">
    <location>
        <position position="139"/>
    </location>
    <ligand>
        <name>hydrogencarbonate</name>
        <dbReference type="ChEBI" id="CHEBI:17544"/>
        <label>1</label>
    </ligand>
</feature>
<feature type="binding site">
    <location>
        <position position="143"/>
    </location>
    <ligand>
        <name>hydrogencarbonate</name>
        <dbReference type="ChEBI" id="CHEBI:17544"/>
        <label>1</label>
    </ligand>
</feature>
<feature type="binding site">
    <location>
        <position position="145"/>
    </location>
    <ligand>
        <name>hydrogencarbonate</name>
        <dbReference type="ChEBI" id="CHEBI:17544"/>
        <label>1</label>
    </ligand>
</feature>
<feature type="binding site">
    <location>
        <position position="146"/>
    </location>
    <ligand>
        <name>hydrogencarbonate</name>
        <dbReference type="ChEBI" id="CHEBI:17544"/>
        <label>1</label>
    </ligand>
</feature>
<feature type="binding site" evidence="15 30">
    <location>
        <position position="207"/>
    </location>
    <ligand>
        <name>Fe(3+)</name>
        <dbReference type="ChEBI" id="CHEBI:29034"/>
        <label>1</label>
    </ligand>
</feature>
<feature type="binding site" evidence="15 30">
    <location>
        <position position="268"/>
    </location>
    <ligand>
        <name>Fe(3+)</name>
        <dbReference type="ChEBI" id="CHEBI:29034"/>
        <label>1</label>
    </ligand>
</feature>
<feature type="binding site" evidence="2 15 16 18 30 33 34 35">
    <location>
        <position position="411"/>
    </location>
    <ligand>
        <name>Fe(3+)</name>
        <dbReference type="ChEBI" id="CHEBI:29034"/>
        <label>2</label>
    </ligand>
</feature>
<feature type="binding site" evidence="2 15 16 18 30 33 34 35">
    <location>
        <position position="445"/>
    </location>
    <ligand>
        <name>Fe(3+)</name>
        <dbReference type="ChEBI" id="CHEBI:29034"/>
        <label>2</label>
    </ligand>
</feature>
<feature type="binding site" evidence="2">
    <location>
        <position position="471"/>
    </location>
    <ligand>
        <name>hydrogencarbonate</name>
        <dbReference type="ChEBI" id="CHEBI:17544"/>
        <label>2</label>
    </ligand>
</feature>
<feature type="binding site" evidence="2">
    <location>
        <position position="475"/>
    </location>
    <ligand>
        <name>hydrogencarbonate</name>
        <dbReference type="ChEBI" id="CHEBI:17544"/>
        <label>2</label>
    </ligand>
</feature>
<feature type="binding site" evidence="2">
    <location>
        <position position="477"/>
    </location>
    <ligand>
        <name>hydrogencarbonate</name>
        <dbReference type="ChEBI" id="CHEBI:17544"/>
        <label>2</label>
    </ligand>
</feature>
<feature type="binding site" evidence="2">
    <location>
        <position position="478"/>
    </location>
    <ligand>
        <name>hydrogencarbonate</name>
        <dbReference type="ChEBI" id="CHEBI:17544"/>
        <label>2</label>
    </ligand>
</feature>
<feature type="binding site" evidence="2 15 16 18 30 33 34 35">
    <location>
        <position position="536"/>
    </location>
    <ligand>
        <name>Fe(3+)</name>
        <dbReference type="ChEBI" id="CHEBI:29034"/>
        <label>2</label>
    </ligand>
</feature>
<feature type="binding site" evidence="2 15 16 18 30 33 34 35">
    <location>
        <position position="604"/>
    </location>
    <ligand>
        <name>Fe(3+)</name>
        <dbReference type="ChEBI" id="CHEBI:29034"/>
        <label>2</label>
    </ligand>
</feature>
<feature type="modified residue" description="Dimethylated arginine" evidence="1">
    <location>
        <position position="42"/>
    </location>
</feature>
<feature type="modified residue" description="Phosphoserine; by FAM20C" evidence="17">
    <location>
        <position position="389"/>
    </location>
</feature>
<feature type="modified residue" description="Phosphoserine; by FAM20C" evidence="17">
    <location>
        <position position="685"/>
    </location>
</feature>
<feature type="glycosylation site" id="CAR_000073" description="O-linked (GalNAc...) serine">
    <location>
        <position position="51"/>
    </location>
</feature>
<feature type="glycosylation site" id="CAR_000074" description="N-linked (GlcNAc...) (complex) asparagine" evidence="6 7 9 10 13 14 15 18 34 35">
    <location>
        <position position="432"/>
    </location>
</feature>
<feature type="glycosylation site" description="N-linked (GlcNAc...) asparagine; atypical; partial" evidence="9">
    <location>
        <position position="491"/>
    </location>
</feature>
<feature type="glycosylation site" id="CAR_000075" description="N-linked (GlcNAc...) (complex) asparagine" evidence="6 7 9 10 11 12 13 14 15">
    <location>
        <position position="630"/>
    </location>
</feature>
<feature type="disulfide bond" evidence="2 18 21 34 35">
    <location>
        <begin position="28"/>
        <end position="67"/>
    </location>
</feature>
<feature type="disulfide bond" evidence="2 18 21 34 35">
    <location>
        <begin position="38"/>
        <end position="58"/>
    </location>
</feature>
<feature type="disulfide bond" evidence="2 18 21 34 35">
    <location>
        <begin position="137"/>
        <end position="213"/>
    </location>
</feature>
<feature type="disulfide bond" evidence="2 18 21 34 35">
    <location>
        <begin position="156"/>
        <end position="350"/>
    </location>
</feature>
<feature type="disulfide bond" evidence="2 18 21 34 35">
    <location>
        <begin position="177"/>
        <end position="193"/>
    </location>
</feature>
<feature type="disulfide bond" evidence="18 34 35">
    <location>
        <begin position="180"/>
        <end position="198"/>
    </location>
</feature>
<feature type="disulfide bond" evidence="18 34 35">
    <location>
        <begin position="190"/>
        <end position="196"/>
    </location>
</feature>
<feature type="disulfide bond" evidence="2 18 21 34 35">
    <location>
        <begin position="246"/>
        <end position="260"/>
    </location>
</feature>
<feature type="disulfide bond" evidence="2 21">
    <location>
        <begin position="358"/>
        <end position="615"/>
    </location>
</feature>
<feature type="disulfide bond" evidence="2 18 21 34 35">
    <location>
        <begin position="364"/>
        <end position="396"/>
    </location>
</feature>
<feature type="disulfide bond" evidence="2 18 21 34 35">
    <location>
        <begin position="374"/>
        <end position="387"/>
    </location>
</feature>
<feature type="disulfide bond" evidence="2 18 21 34 35">
    <location>
        <begin position="421"/>
        <end position="693"/>
    </location>
</feature>
<feature type="disulfide bond" evidence="2 18 21 34 35">
    <location>
        <begin position="437"/>
        <end position="656"/>
    </location>
</feature>
<feature type="disulfide bond" evidence="2 18 21 34 35">
    <location>
        <begin position="469"/>
        <end position="542"/>
    </location>
</feature>
<feature type="disulfide bond" evidence="2 18 21 34 35">
    <location>
        <begin position="493"/>
        <end position="684"/>
    </location>
</feature>
<feature type="disulfide bond" evidence="2 18 21 34 35">
    <location>
        <begin position="503"/>
        <end position="517"/>
    </location>
</feature>
<feature type="disulfide bond" evidence="2 18 21 34 35">
    <location>
        <begin position="514"/>
        <end position="525"/>
    </location>
</feature>
<feature type="disulfide bond" evidence="2 18 21 34 35">
    <location>
        <begin position="582"/>
        <end position="596"/>
    </location>
</feature>
<feature type="disulfide bond" evidence="2 21">
    <location>
        <begin position="634"/>
        <end position="639"/>
    </location>
</feature>
<feature type="sequence variant" id="VAR_034569" description="In dbSNP:rs41298293.">
    <original>R</original>
    <variation>L</variation>
    <location>
        <position position="42"/>
    </location>
</feature>
<feature type="sequence variant" id="VAR_029280" description="In dbSNP:rs8177318." evidence="25">
    <original>S</original>
    <variation>R</variation>
    <location>
        <position position="55"/>
    </location>
</feature>
<feature type="sequence variant" id="VAR_034570" description="In dbSNP:rs41298977.">
    <original>A</original>
    <variation>V</variation>
    <location>
        <position position="76"/>
    </location>
</feature>
<feature type="sequence variant" id="VAR_038810" description="In ATRAF; dbSNP:rs121918681." evidence="8">
    <original>D</original>
    <variation>N</variation>
    <location>
        <position position="77"/>
    </location>
</feature>
<feature type="sequence variant" id="VAR_011997" description="In dbSNP:rs1799830." evidence="23">
    <original>G</original>
    <variation>S</variation>
    <location>
        <position position="142"/>
    </location>
</feature>
<feature type="sequence variant" id="VAR_011998" description="In allele TF*C3; associated with a reduction in total iron binding capacity; risk factor for iron deficiency anemia in menstruating white women; dbSNP:rs1799899." evidence="4 5 25">
    <original>G</original>
    <variation>S</variation>
    <location>
        <position position="277"/>
    </location>
</feature>
<feature type="sequence variant" id="VAR_007544" description="In allele TF*D1; dbSNP:rs8177238." evidence="25">
    <original>D</original>
    <variation>G</variation>
    <location>
        <position position="296"/>
    </location>
</feature>
<feature type="sequence variant" id="VAR_007545" description="In allele TF*CHI; dbSNP:rs41295774.">
    <original>H</original>
    <variation>R</variation>
    <location>
        <position position="319"/>
    </location>
</feature>
<feature type="sequence variant" id="VAR_011999" description="In dbSNP:rs1804498.">
    <original>W</original>
    <variation>C</variation>
    <location>
        <position position="377"/>
    </location>
</feature>
<feature type="sequence variant" id="VAR_058199" description="In dbSNP:rs2692696." evidence="36">
    <original>I</original>
    <variation>V</variation>
    <location>
        <position position="448"/>
    </location>
</feature>
<feature type="sequence variant" id="VAR_012997" description="In ATRAF; dbSNP:rs121918679." evidence="3">
    <original>A</original>
    <variation>P</variation>
    <location>
        <position position="477"/>
    </location>
</feature>
<feature type="sequence variant" id="VAR_034571" description="In dbSNP:rs41296590.">
    <original>G</original>
    <variation>V</variation>
    <location>
        <position position="562"/>
    </location>
</feature>
<feature type="sequence variant" id="VAR_012000" description="In allele TF*C2; dbSNP:rs1049296." evidence="4 5 22 25">
    <original>P</original>
    <variation>S</variation>
    <location>
        <position position="589"/>
    </location>
</feature>
<feature type="sequence variant" id="VAR_012001" description="In dbSNP:rs1130537.">
    <original>T</original>
    <variation>P</variation>
    <location>
        <position position="645"/>
    </location>
</feature>
<feature type="sequence variant" id="VAR_012998" description="In allele TF*BV; dbSNP:rs121918678." evidence="24">
    <original>K</original>
    <variation>E</variation>
    <location>
        <position position="646"/>
    </location>
</feature>
<feature type="sequence variant" id="VAR_012999" description="In allele TF*B2; dbSNP:rs121918677." evidence="5">
    <original>G</original>
    <variation>E</variation>
    <location>
        <position position="671"/>
    </location>
</feature>
<feature type="sequence conflict" description="In Ref. 9; AAH59367." evidence="26" ref="9">
    <original>D</original>
    <variation>N</variation>
    <location>
        <position position="216"/>
    </location>
</feature>
<feature type="sequence conflict" description="In Ref. 12; AA sequence." evidence="26" ref="12">
    <original>Q</original>
    <variation>E</variation>
    <location>
        <position position="264"/>
    </location>
</feature>
<feature type="sequence conflict" description="In Ref. 12; AA sequence and 14; AAA61141." evidence="26" ref="12 14">
    <original>D</original>
    <variation>N</variation>
    <location>
        <position position="329"/>
    </location>
</feature>
<feature type="sequence conflict" description="In Ref. 9; AAH59367." evidence="26" ref="9">
    <original>P</original>
    <variation>Q</variation>
    <location>
        <position position="351"/>
    </location>
</feature>
<feature type="sequence conflict" description="In Ref. 12; AA sequence." evidence="26" ref="12">
    <original>NS</original>
    <variation>SD</variation>
    <location>
        <begin position="380"/>
        <end position="381"/>
    </location>
</feature>
<feature type="sequence conflict" description="In Ref. 12; AA sequence." evidence="26" ref="12">
    <original>N</original>
    <variation>D</variation>
    <location>
        <position position="436"/>
    </location>
</feature>
<feature type="sequence conflict" description="In Ref. 12; AA sequence." evidence="26" ref="12">
    <original>PQNT</original>
    <variation>TQNP</variation>
    <location>
        <begin position="558"/>
        <end position="561"/>
    </location>
</feature>
<feature type="sequence conflict" description="In Ref. 12; AA sequence." evidence="26" ref="12">
    <original>E</original>
    <variation>Q</variation>
    <location>
        <position position="591"/>
    </location>
</feature>
<feature type="sequence conflict" description="In Ref. 12; AA sequence." evidence="26" ref="12">
    <original>E</original>
    <variation>Q</variation>
    <location>
        <position position="672"/>
    </location>
</feature>
<feature type="sequence conflict" description="In Ref. 18; AAA61142." evidence="26" ref="18">
    <original>E</original>
    <variation>G</variation>
    <location>
        <position position="691"/>
    </location>
</feature>
<feature type="strand" evidence="40">
    <location>
        <begin position="24"/>
        <end position="30"/>
    </location>
</feature>
<feature type="helix" evidence="40">
    <location>
        <begin position="31"/>
        <end position="48"/>
    </location>
</feature>
<feature type="strand" evidence="46">
    <location>
        <begin position="51"/>
        <end position="54"/>
    </location>
</feature>
<feature type="strand" evidence="40">
    <location>
        <begin position="55"/>
        <end position="63"/>
    </location>
</feature>
<feature type="helix" evidence="40">
    <location>
        <begin position="64"/>
        <end position="72"/>
    </location>
</feature>
<feature type="strand" evidence="40">
    <location>
        <begin position="78"/>
        <end position="81"/>
    </location>
</feature>
<feature type="helix" evidence="40">
    <location>
        <begin position="83"/>
        <end position="90"/>
    </location>
</feature>
<feature type="turn" evidence="40">
    <location>
        <begin position="92"/>
        <end position="94"/>
    </location>
</feature>
<feature type="strand" evidence="40">
    <location>
        <begin position="97"/>
        <end position="105"/>
    </location>
</feature>
<feature type="strand" evidence="40">
    <location>
        <begin position="107"/>
        <end position="121"/>
    </location>
</feature>
<feature type="helix" evidence="40">
    <location>
        <begin position="128"/>
        <end position="130"/>
    </location>
</feature>
<feature type="strand" evidence="40">
    <location>
        <begin position="136"/>
        <end position="139"/>
    </location>
</feature>
<feature type="turn" evidence="40">
    <location>
        <begin position="144"/>
        <end position="147"/>
    </location>
</feature>
<feature type="helix" evidence="40">
    <location>
        <begin position="148"/>
        <end position="154"/>
    </location>
</feature>
<feature type="helix" evidence="40">
    <location>
        <begin position="155"/>
        <end position="157"/>
    </location>
</feature>
<feature type="strand" evidence="38">
    <location>
        <begin position="158"/>
        <end position="160"/>
    </location>
</feature>
<feature type="helix" evidence="40">
    <location>
        <begin position="165"/>
        <end position="172"/>
    </location>
</feature>
<feature type="strand" evidence="40">
    <location>
        <begin position="173"/>
        <end position="177"/>
    </location>
</feature>
<feature type="turn" evidence="40">
    <location>
        <begin position="183"/>
        <end position="185"/>
    </location>
</feature>
<feature type="helix" evidence="40">
    <location>
        <begin position="187"/>
        <end position="190"/>
    </location>
</feature>
<feature type="strand" evidence="37">
    <location>
        <begin position="191"/>
        <end position="193"/>
    </location>
</feature>
<feature type="helix" evidence="41">
    <location>
        <begin position="194"/>
        <end position="196"/>
    </location>
</feature>
<feature type="strand" evidence="43">
    <location>
        <begin position="198"/>
        <end position="202"/>
    </location>
</feature>
<feature type="helix" evidence="40">
    <location>
        <begin position="206"/>
        <end position="215"/>
    </location>
</feature>
<feature type="strand" evidence="40">
    <location>
        <begin position="220"/>
        <end position="225"/>
    </location>
</feature>
<feature type="helix" evidence="40">
    <location>
        <begin position="228"/>
        <end position="232"/>
    </location>
</feature>
<feature type="helix" evidence="40">
    <location>
        <begin position="236"/>
        <end position="239"/>
    </location>
</feature>
<feature type="strand" evidence="40">
    <location>
        <begin position="242"/>
        <end position="245"/>
    </location>
</feature>
<feature type="turn" evidence="37">
    <location>
        <begin position="247"/>
        <end position="249"/>
    </location>
</feature>
<feature type="strand" evidence="40">
    <location>
        <begin position="251"/>
        <end position="253"/>
    </location>
</feature>
<feature type="helix" evidence="40">
    <location>
        <begin position="254"/>
        <end position="259"/>
    </location>
</feature>
<feature type="strand" evidence="40">
    <location>
        <begin position="262"/>
        <end position="266"/>
    </location>
</feature>
<feature type="strand" evidence="40">
    <location>
        <begin position="269"/>
        <end position="272"/>
    </location>
</feature>
<feature type="strand" evidence="40">
    <location>
        <begin position="274"/>
        <end position="276"/>
    </location>
</feature>
<feature type="helix" evidence="40">
    <location>
        <begin position="279"/>
        <end position="293"/>
    </location>
</feature>
<feature type="turn" evidence="40">
    <location>
        <begin position="295"/>
        <end position="297"/>
    </location>
</feature>
<feature type="strand" evidence="46">
    <location>
        <begin position="298"/>
        <end position="300"/>
    </location>
</feature>
<feature type="strand" evidence="40">
    <location>
        <begin position="310"/>
        <end position="314"/>
    </location>
</feature>
<feature type="strand" evidence="40">
    <location>
        <begin position="318"/>
        <end position="323"/>
    </location>
</feature>
<feature type="helix" evidence="40">
    <location>
        <begin position="330"/>
        <end position="334"/>
    </location>
</feature>
<feature type="helix" evidence="40">
    <location>
        <begin position="336"/>
        <end position="345"/>
    </location>
</feature>
<feature type="turn" evidence="39">
    <location>
        <begin position="346"/>
        <end position="348"/>
    </location>
</feature>
<feature type="helix" evidence="45">
    <location>
        <begin position="354"/>
        <end position="357"/>
    </location>
</feature>
<feature type="strand" evidence="44">
    <location>
        <begin position="360"/>
        <end position="365"/>
    </location>
</feature>
<feature type="helix" evidence="44">
    <location>
        <begin position="368"/>
        <end position="380"/>
    </location>
</feature>
<feature type="turn" evidence="44">
    <location>
        <begin position="381"/>
        <end position="383"/>
    </location>
</feature>
<feature type="strand" evidence="44">
    <location>
        <begin position="384"/>
        <end position="389"/>
    </location>
</feature>
<feature type="helix" evidence="44">
    <location>
        <begin position="393"/>
        <end position="401"/>
    </location>
</feature>
<feature type="strand" evidence="44">
    <location>
        <begin position="407"/>
        <end position="410"/>
    </location>
</feature>
<feature type="helix" evidence="44">
    <location>
        <begin position="412"/>
        <end position="420"/>
    </location>
</feature>
<feature type="strand" evidence="44">
    <location>
        <begin position="424"/>
        <end position="430"/>
    </location>
</feature>
<feature type="helix" evidence="44">
    <location>
        <begin position="437"/>
        <end position="439"/>
    </location>
</feature>
<feature type="strand" evidence="44">
    <location>
        <begin position="445"/>
        <end position="452"/>
    </location>
</feature>
<feature type="strand" evidence="42">
    <location>
        <begin position="455"/>
        <end position="457"/>
    </location>
</feature>
<feature type="helix" evidence="44">
    <location>
        <begin position="460"/>
        <end position="462"/>
    </location>
</feature>
<feature type="strand" evidence="44">
    <location>
        <begin position="466"/>
        <end position="471"/>
    </location>
</feature>
<feature type="turn" evidence="44">
    <location>
        <begin position="476"/>
        <end position="479"/>
    </location>
</feature>
<feature type="helix" evidence="44">
    <location>
        <begin position="480"/>
        <end position="485"/>
    </location>
</feature>
<feature type="helix" evidence="44">
    <location>
        <begin position="487"/>
        <end position="489"/>
    </location>
</feature>
<feature type="strand" evidence="51">
    <location>
        <begin position="491"/>
        <end position="493"/>
    </location>
</feature>
<feature type="helix" evidence="44">
    <location>
        <begin position="495"/>
        <end position="497"/>
    </location>
</feature>
<feature type="strand" evidence="44">
    <location>
        <begin position="498"/>
        <end position="503"/>
    </location>
</feature>
<feature type="strand" evidence="50">
    <location>
        <begin position="509"/>
        <end position="511"/>
    </location>
</feature>
<feature type="helix" evidence="44">
    <location>
        <begin position="512"/>
        <end position="514"/>
    </location>
</feature>
<feature type="helix" evidence="44">
    <location>
        <begin position="521"/>
        <end position="523"/>
    </location>
</feature>
<feature type="strand" evidence="41">
    <location>
        <begin position="531"/>
        <end position="533"/>
    </location>
</feature>
<feature type="helix" evidence="44">
    <location>
        <begin position="535"/>
        <end position="545"/>
    </location>
</feature>
<feature type="strand" evidence="44">
    <location>
        <begin position="548"/>
        <end position="553"/>
    </location>
</feature>
<feature type="helix" evidence="44">
    <location>
        <begin position="556"/>
        <end position="559"/>
    </location>
</feature>
<feature type="turn" evidence="52">
    <location>
        <begin position="561"/>
        <end position="564"/>
    </location>
</feature>
<feature type="turn" evidence="44">
    <location>
        <begin position="568"/>
        <end position="572"/>
    </location>
</feature>
<feature type="helix" evidence="44">
    <location>
        <begin position="575"/>
        <end position="577"/>
    </location>
</feature>
<feature type="strand" evidence="44">
    <location>
        <begin position="578"/>
        <end position="581"/>
    </location>
</feature>
<feature type="strand" evidence="49">
    <location>
        <begin position="583"/>
        <end position="585"/>
    </location>
</feature>
<feature type="strand" evidence="44">
    <location>
        <begin position="587"/>
        <end position="589"/>
    </location>
</feature>
<feature type="helix" evidence="44">
    <location>
        <begin position="590"/>
        <end position="595"/>
    </location>
</feature>
<feature type="strand" evidence="44">
    <location>
        <begin position="598"/>
        <end position="601"/>
    </location>
</feature>
<feature type="strand" evidence="44">
    <location>
        <begin position="605"/>
        <end position="608"/>
    </location>
</feature>
<feature type="helix" evidence="44">
    <location>
        <begin position="610"/>
        <end position="612"/>
    </location>
</feature>
<feature type="helix" evidence="44">
    <location>
        <begin position="613"/>
        <end position="627"/>
    </location>
</feature>
<feature type="strand" evidence="48">
    <location>
        <begin position="628"/>
        <end position="630"/>
    </location>
</feature>
<feature type="strand" evidence="44">
    <location>
        <begin position="635"/>
        <end position="637"/>
    </location>
</feature>
<feature type="strand" evidence="44">
    <location>
        <begin position="644"/>
        <end position="646"/>
    </location>
</feature>
<feature type="strand" evidence="44">
    <location>
        <begin position="648"/>
        <end position="650"/>
    </location>
</feature>
<feature type="strand" evidence="44">
    <location>
        <begin position="656"/>
        <end position="659"/>
    </location>
</feature>
<feature type="helix" evidence="47">
    <location>
        <begin position="661"/>
        <end position="663"/>
    </location>
</feature>
<feature type="helix" evidence="44">
    <location>
        <begin position="666"/>
        <end position="669"/>
    </location>
</feature>
<feature type="helix" evidence="44">
    <location>
        <begin position="672"/>
        <end position="684"/>
    </location>
</feature>
<feature type="helix" evidence="44">
    <location>
        <begin position="688"/>
        <end position="694"/>
    </location>
</feature>
<organism>
    <name type="scientific">Homo sapiens</name>
    <name type="common">Human</name>
    <dbReference type="NCBI Taxonomy" id="9606"/>
    <lineage>
        <taxon>Eukaryota</taxon>
        <taxon>Metazoa</taxon>
        <taxon>Chordata</taxon>
        <taxon>Craniata</taxon>
        <taxon>Vertebrata</taxon>
        <taxon>Euteleostomi</taxon>
        <taxon>Mammalia</taxon>
        <taxon>Eutheria</taxon>
        <taxon>Euarchontoglires</taxon>
        <taxon>Primates</taxon>
        <taxon>Haplorrhini</taxon>
        <taxon>Catarrhini</taxon>
        <taxon>Hominidae</taxon>
        <taxon>Homo</taxon>
    </lineage>
</organism>
<keyword id="KW-0002">3D-structure</keyword>
<keyword id="KW-0903">Direct protein sequencing</keyword>
<keyword id="KW-0225">Disease variant</keyword>
<keyword id="KW-1015">Disulfide bond</keyword>
<keyword id="KW-0325">Glycoprotein</keyword>
<keyword id="KW-0406">Ion transport</keyword>
<keyword id="KW-0408">Iron</keyword>
<keyword id="KW-0410">Iron transport</keyword>
<keyword id="KW-0479">Metal-binding</keyword>
<keyword id="KW-0488">Methylation</keyword>
<keyword id="KW-0597">Phosphoprotein</keyword>
<keyword id="KW-1267">Proteomics identification</keyword>
<keyword id="KW-1185">Reference proteome</keyword>
<keyword id="KW-0677">Repeat</keyword>
<keyword id="KW-0964">Secreted</keyword>
<keyword id="KW-0732">Signal</keyword>
<keyword id="KW-0813">Transport</keyword>
<accession>P02787</accession>
<accession>O43890</accession>
<accession>Q1HBA5</accession>
<accession>Q9NQB8</accession>
<accession>Q9UHV0</accession>
<comment type="function">
    <text>Transferrins are iron binding transport proteins which can bind two Fe(3+) ions in association with the binding of an anion, usually bicarbonate. It is responsible for the transport of iron from sites of absorption and heme degradation to those of storage and utilization. Serum transferrin may also have a further role in stimulating cell proliferation.</text>
</comment>
<comment type="function">
    <text evidence="15 16">(Microbial infection) Serves as an iron source for Neisseria species, which capture the protein and extract its iron for their own use.</text>
</comment>
<comment type="function">
    <text evidence="18">(Microbial infection) Serves as an iron source for parasite T.brucei (strain 427), which capture TF via its own transferrin receptor ESAG6:ESAG7 and extract its iron for its own use.</text>
</comment>
<comment type="subunit">
    <text evidence="15 19 27">Monomer (Probable) (PubMed:22327295). Part of a complex composed of SLC40A1/ferroportin, TF/transferrin and HEPH/hephaestin that transfers iron from cells to transferrin (PubMed:37277838).</text>
</comment>
<comment type="subunit">
    <text evidence="15">(Microbial infection) Binds to Neisseria transferrin-binding protein A (tbpA or tbp1). Forms a large complex with TbpA and TbpB.</text>
</comment>
<comment type="subunit">
    <text evidence="15 16">(Microbial infection) Binds to Neisseria transferrin-binding protein B (tbpb or tbp2).</text>
</comment>
<comment type="interaction">
    <interactant intactId="EBI-714319">
        <id>P02787</id>
    </interactant>
    <interactant intactId="EBI-17444777">
        <id>O43315</id>
        <label>AQP9</label>
    </interactant>
    <organismsDiffer>false</organismsDiffer>
    <experiments>3</experiments>
</comment>
<comment type="interaction">
    <interactant intactId="EBI-714319">
        <id>P02787</id>
    </interactant>
    <interactant intactId="EBI-18400628">
        <id>O00501</id>
        <label>CLDN5</label>
    </interactant>
    <organismsDiffer>false</organismsDiffer>
    <experiments>3</experiments>
</comment>
<comment type="interaction">
    <interactant intactId="EBI-714319">
        <id>P02787</id>
    </interactant>
    <interactant intactId="EBI-18013275">
        <id>Q7Z7G2</id>
        <label>CPLX4</label>
    </interactant>
    <organismsDiffer>false</organismsDiffer>
    <experiments>3</experiments>
</comment>
<comment type="interaction">
    <interactant intactId="EBI-714319">
        <id>P02787</id>
    </interactant>
    <interactant intactId="EBI-18535450">
        <id>Q9GZR5</id>
        <label>ELOVL4</label>
    </interactant>
    <organismsDiffer>false</organismsDiffer>
    <experiments>3</experiments>
</comment>
<comment type="interaction">
    <interactant intactId="EBI-714319">
        <id>P02787</id>
    </interactant>
    <interactant intactId="EBI-781551">
        <id>Q9Y282</id>
        <label>ERGIC3</label>
    </interactant>
    <organismsDiffer>false</organismsDiffer>
    <experiments>3</experiments>
</comment>
<comment type="interaction">
    <interactant intactId="EBI-714319">
        <id>P02787</id>
    </interactant>
    <interactant intactId="EBI-18938272">
        <id>Q96KR6</id>
        <label>FAM210B</label>
    </interactant>
    <organismsDiffer>false</organismsDiffer>
    <experiments>3</experiments>
</comment>
<comment type="interaction">
    <interactant intactId="EBI-714319">
        <id>P02787</id>
    </interactant>
    <interactant intactId="EBI-3436637">
        <id>P01350</id>
        <label>GAST</label>
    </interactant>
    <organismsDiffer>false</organismsDiffer>
    <experiments>5</experiments>
</comment>
<comment type="interaction">
    <interactant intactId="EBI-714319">
        <id>P02787</id>
    </interactant>
    <interactant intactId="EBI-17565645">
        <id>P08034</id>
        <label>GJB1</label>
    </interactant>
    <organismsDiffer>false</organismsDiffer>
    <experiments>3</experiments>
</comment>
<comment type="interaction">
    <interactant intactId="EBI-714319">
        <id>P02787</id>
    </interactant>
    <interactant intactId="EBI-712073">
        <id>Q8NBJ4</id>
        <label>GOLM1</label>
    </interactant>
    <organismsDiffer>false</organismsDiffer>
    <experiments>3</experiments>
</comment>
<comment type="interaction">
    <interactant intactId="EBI-714319">
        <id>P02787</id>
    </interactant>
    <interactant intactId="EBI-18076404">
        <id>O15529</id>
        <label>GPR42</label>
    </interactant>
    <organismsDiffer>false</organismsDiffer>
    <experiments>3</experiments>
</comment>
<comment type="interaction">
    <interactant intactId="EBI-714319">
        <id>P02787</id>
    </interactant>
    <interactant intactId="EBI-11721746">
        <id>Q8TED1</id>
        <label>GPX8</label>
    </interactant>
    <organismsDiffer>false</organismsDiffer>
    <experiments>3</experiments>
</comment>
<comment type="interaction">
    <interactant intactId="EBI-714319">
        <id>P02787</id>
    </interactant>
    <interactant intactId="EBI-18053395">
        <id>Q7Z5P4</id>
        <label>HSD17B13</label>
    </interactant>
    <organismsDiffer>false</organismsDiffer>
    <experiments>3</experiments>
</comment>
<comment type="interaction">
    <interactant intactId="EBI-714319">
        <id>P02787</id>
    </interactant>
    <interactant intactId="EBI-17490413">
        <id>A8MZ59</id>
        <label>LEUTX</label>
    </interactant>
    <organismsDiffer>false</organismsDiffer>
    <experiments>3</experiments>
</comment>
<comment type="interaction">
    <interactant intactId="EBI-714319">
        <id>P02787</id>
    </interactant>
    <interactant intactId="EBI-1050125">
        <id>O15173</id>
        <label>PGRMC2</label>
    </interactant>
    <organismsDiffer>false</organismsDiffer>
    <experiments>3</experiments>
</comment>
<comment type="interaction">
    <interactant intactId="EBI-714319">
        <id>P02787</id>
    </interactant>
    <interactant intactId="EBI-1056589">
        <id>Q96TC7</id>
        <label>RMDN3</label>
    </interactant>
    <organismsDiffer>false</organismsDiffer>
    <experiments>3</experiments>
</comment>
<comment type="interaction">
    <interactant intactId="EBI-714319">
        <id>P02787</id>
    </interactant>
    <interactant intactId="EBI-18159983">
        <id>Q3KNW5</id>
        <label>SLC10A6</label>
    </interactant>
    <organismsDiffer>false</organismsDiffer>
    <experiments>3</experiments>
</comment>
<comment type="interaction">
    <interactant intactId="EBI-714319">
        <id>P02787</id>
    </interactant>
    <interactant intactId="EBI-12814225">
        <id>Q9BXS9-3</id>
        <label>SLC26A6</label>
    </interactant>
    <organismsDiffer>false</organismsDiffer>
    <experiments>3</experiments>
</comment>
<comment type="interaction">
    <interactant intactId="EBI-714319">
        <id>P02787</id>
    </interactant>
    <interactant intactId="EBI-1057058">
        <id>Q99523</id>
        <label>SORT1</label>
    </interactant>
    <organismsDiffer>false</organismsDiffer>
    <experiments>3</experiments>
</comment>
<comment type="interaction">
    <interactant intactId="EBI-714319">
        <id>P02787</id>
    </interactant>
    <interactant intactId="EBI-12078338">
        <id>O43278-2</id>
        <label>SPINT1</label>
    </interactant>
    <organismsDiffer>false</organismsDiffer>
    <experiments>3</experiments>
</comment>
<comment type="interaction">
    <interactant intactId="EBI-714319">
        <id>P02787</id>
    </interactant>
    <interactant intactId="EBI-8032987">
        <id>Q8N9I0</id>
        <label>SYT2</label>
    </interactant>
    <organismsDiffer>false</organismsDiffer>
    <experiments>3</experiments>
</comment>
<comment type="interaction">
    <interactant intactId="EBI-714319">
        <id>P02787</id>
    </interactant>
    <interactant intactId="EBI-355727">
        <id>P02786</id>
        <label>TFRC</label>
    </interactant>
    <organismsDiffer>false</organismsDiffer>
    <experiments>7</experiments>
</comment>
<comment type="interaction">
    <interactant intactId="EBI-714319">
        <id>P02787</id>
    </interactant>
    <interactant intactId="EBI-18178701">
        <id>Q4KMG9</id>
        <label>TMEM52B</label>
    </interactant>
    <organismsDiffer>false</organismsDiffer>
    <experiments>3</experiments>
</comment>
<comment type="interaction">
    <interactant intactId="EBI-714319">
        <id>P02787</id>
    </interactant>
    <interactant intactId="EBI-15968954">
        <id>Q9K0U9</id>
        <label>tbp1</label>
    </interactant>
    <organismsDiffer>true</organismsDiffer>
    <experiments>4</experiments>
</comment>
<comment type="interaction">
    <interactant intactId="EBI-714319">
        <id>P02787</id>
    </interactant>
    <interactant intactId="EBI-15970048">
        <id>Q09057</id>
        <label>tbpB</label>
    </interactant>
    <organismsDiffer>true</organismsDiffer>
    <experiments>3</experiments>
</comment>
<comment type="interaction">
    <interactant intactId="EBI-714319">
        <id>P02787</id>
    </interactant>
    <interactant intactId="EBI-15968994">
        <id>Q9K0V0</id>
        <label>tbpB</label>
    </interactant>
    <organismsDiffer>true</organismsDiffer>
    <experiments>2</experiments>
</comment>
<comment type="interaction">
    <interactant intactId="EBI-40201768">
        <id>PRO_0000035715</id>
    </interactant>
    <interactant intactId="EBI-355727">
        <id>P02786</id>
        <label>TFRC</label>
    </interactant>
    <organismsDiffer>false</organismsDiffer>
    <experiments>4</experiments>
</comment>
<comment type="subcellular location">
    <subcellularLocation>
        <location>Secreted</location>
    </subcellularLocation>
</comment>
<comment type="tissue specificity">
    <text>Expressed by the liver and secreted in plasma.</text>
</comment>
<comment type="domain">
    <text evidence="15 16">Has a bilobed structure, each lobe binds a single Fe(3+) ion. Does not always bind 2 Fe(3+) ions.</text>
</comment>
<comment type="domain">
    <text evidence="15 16">(Microbial infection) Binds to Neisseria transferrin-binding proteins A and B via its C-terminal lobe only. The L3 helix finger of TbpA inserts into the C-terminal lobe of TF, altering its conformation and probably disturbing the coordination of iron 2. Electron microscopy suggests that in the TbpA-TbpB-TF complex, TF is captured directly above the loop domain of TbpA in a chamber of about 1000 Angstroms(3) formed by the 3 proteins, where interactions between the proteins serve to abstract iron 2 from TF (PubMed:22327295, PubMed:22343719). Binding to TbpB does not alter the conformation of the C-terminal lobe (PubMed:22343719).</text>
</comment>
<comment type="disease" evidence="3 8">
    <disease id="DI-00145">
        <name>Atransferrinemia</name>
        <acronym>ATRAF</acronym>
        <description>A rare autosomal recessive disorder characterized by abnormal synthesis of transferrin leading to iron overload and microcytic hypochromic anemia.</description>
        <dbReference type="MIM" id="209300"/>
    </disease>
    <text>The disease is caused by variants affecting the gene represented in this entry.</text>
</comment>
<comment type="similarity">
    <text evidence="2">Belongs to the transferrin family.</text>
</comment>
<comment type="sequence caution" evidence="26">
    <conflict type="erroneous initiation">
        <sequence resource="EMBL-CDS" id="AAF22007"/>
    </conflict>
    <text>Truncated N-terminus.</text>
</comment>
<comment type="online information" name="Wikipedia">
    <link uri="https://en.wikipedia.org/wiki/Transferrin"/>
    <text>Transferrin entry</text>
</comment>
<proteinExistence type="evidence at protein level"/>
<gene>
    <name evidence="28" type="primary">TF</name>
    <name type="ORF">PRO1400</name>
</gene>
<reference key="1">
    <citation type="journal article" date="1984" name="Proc. Natl. Acad. Sci. U.S.A.">
        <title>Human transferrin: cDNA characterization and chromosomal localization.</title>
        <authorList>
            <person name="Yang F."/>
            <person name="Lum J.B."/>
            <person name="McGill J.R."/>
            <person name="Moore C.M."/>
            <person name="Naylor S.L."/>
            <person name="van Bragt P.H."/>
            <person name="Baldwin W.D."/>
            <person name="Bowman B.H."/>
        </authorList>
    </citation>
    <scope>NUCLEOTIDE SEQUENCE [MRNA]</scope>
    <scope>VARIANTS TF*B2; TF*CHI AND TF*D1</scope>
</reference>
<reference key="2">
    <citation type="journal article" date="1987" name="Gene">
        <title>Complete structure of the human transferrin gene. Comparison with analogous chicken gene and human pseudogene.</title>
        <authorList>
            <person name="Schaeffer E."/>
            <person name="Lucero M.A."/>
            <person name="Jeltsch J.-M."/>
            <person name="Py M.-C."/>
            <person name="Levin M.J."/>
            <person name="Chambon P."/>
            <person name="Cohen G.N."/>
            <person name="Zakin M.M."/>
        </authorList>
    </citation>
    <scope>NUCLEOTIDE SEQUENCE [GENOMIC DNA]</scope>
</reference>
<reference key="3">
    <citation type="journal article" date="1991" name="Ann. N. Y. Acad. Sci.">
        <title>A cloned gene for human transferrin.</title>
        <authorList>
            <person name="Hershberger C.L."/>
            <person name="Larson J.L."/>
            <person name="Arnold B."/>
            <person name="Rosteck P.R. Jr."/>
            <person name="Williams P."/>
            <person name="Dehoff B."/>
            <person name="Dunn P."/>
            <person name="O'Neal K.L."/>
            <person name="Riemen M.W."/>
            <person name="Tice P.A."/>
        </authorList>
    </citation>
    <scope>NUCLEOTIDE SEQUENCE [MRNA]</scope>
    <source>
        <tissue>Liver</tissue>
    </source>
</reference>
<reference key="4">
    <citation type="journal article" date="2000" name="Blood">
        <title>Molecular characterization of a case of atransferrinemia.</title>
        <authorList>
            <person name="Beutler E."/>
            <person name="Gelbart T."/>
            <person name="Lee P.L."/>
            <person name="Trevino R."/>
            <person name="Fernandez M.A."/>
            <person name="Fairbanks V.F."/>
        </authorList>
    </citation>
    <scope>NUCLEOTIDE SEQUENCE [GENOMIC DNA]</scope>
    <scope>VARIANT ATRAF PRO-477</scope>
</reference>
<reference key="5">
    <citation type="submission" date="2003-05" db="EMBL/GenBank/DDBJ databases">
        <authorList>
            <consortium name="SeattleSNPs variation discovery resource"/>
        </authorList>
    </citation>
    <scope>NUCLEOTIDE SEQUENCE [GENOMIC DNA]</scope>
    <scope>VARIANTS ARG-55; SER-277; GLY-296 AND SER-589</scope>
</reference>
<reference key="6">
    <citation type="submission" date="2006-05" db="EMBL/GenBank/DDBJ databases">
        <authorList>
            <consortium name="NHLBI resequencing and genotyping service (RS&amp;G)"/>
        </authorList>
    </citation>
    <scope>NUCLEOTIDE SEQUENCE [GENOMIC DNA]</scope>
</reference>
<reference key="7">
    <citation type="journal article" date="2006" name="Nature">
        <title>The DNA sequence, annotation and analysis of human chromosome 3.</title>
        <authorList>
            <person name="Muzny D.M."/>
            <person name="Scherer S.E."/>
            <person name="Kaul R."/>
            <person name="Wang J."/>
            <person name="Yu J."/>
            <person name="Sudbrak R."/>
            <person name="Buhay C.J."/>
            <person name="Chen R."/>
            <person name="Cree A."/>
            <person name="Ding Y."/>
            <person name="Dugan-Rocha S."/>
            <person name="Gill R."/>
            <person name="Gunaratne P."/>
            <person name="Harris R.A."/>
            <person name="Hawes A.C."/>
            <person name="Hernandez J."/>
            <person name="Hodgson A.V."/>
            <person name="Hume J."/>
            <person name="Jackson A."/>
            <person name="Khan Z.M."/>
            <person name="Kovar-Smith C."/>
            <person name="Lewis L.R."/>
            <person name="Lozado R.J."/>
            <person name="Metzker M.L."/>
            <person name="Milosavljevic A."/>
            <person name="Miner G.R."/>
            <person name="Morgan M.B."/>
            <person name="Nazareth L.V."/>
            <person name="Scott G."/>
            <person name="Sodergren E."/>
            <person name="Song X.-Z."/>
            <person name="Steffen D."/>
            <person name="Wei S."/>
            <person name="Wheeler D.A."/>
            <person name="Wright M.W."/>
            <person name="Worley K.C."/>
            <person name="Yuan Y."/>
            <person name="Zhang Z."/>
            <person name="Adams C.Q."/>
            <person name="Ansari-Lari M.A."/>
            <person name="Ayele M."/>
            <person name="Brown M.J."/>
            <person name="Chen G."/>
            <person name="Chen Z."/>
            <person name="Clendenning J."/>
            <person name="Clerc-Blankenburg K.P."/>
            <person name="Chen R."/>
            <person name="Chen Z."/>
            <person name="Davis C."/>
            <person name="Delgado O."/>
            <person name="Dinh H.H."/>
            <person name="Dong W."/>
            <person name="Draper H."/>
            <person name="Ernst S."/>
            <person name="Fu G."/>
            <person name="Gonzalez-Garay M.L."/>
            <person name="Garcia D.K."/>
            <person name="Gillett W."/>
            <person name="Gu J."/>
            <person name="Hao B."/>
            <person name="Haugen E."/>
            <person name="Havlak P."/>
            <person name="He X."/>
            <person name="Hennig S."/>
            <person name="Hu S."/>
            <person name="Huang W."/>
            <person name="Jackson L.R."/>
            <person name="Jacob L.S."/>
            <person name="Kelly S.H."/>
            <person name="Kube M."/>
            <person name="Levy R."/>
            <person name="Li Z."/>
            <person name="Liu B."/>
            <person name="Liu J."/>
            <person name="Liu W."/>
            <person name="Lu J."/>
            <person name="Maheshwari M."/>
            <person name="Nguyen B.-V."/>
            <person name="Okwuonu G.O."/>
            <person name="Palmeiri A."/>
            <person name="Pasternak S."/>
            <person name="Perez L.M."/>
            <person name="Phelps K.A."/>
            <person name="Plopper F.J."/>
            <person name="Qiang B."/>
            <person name="Raymond C."/>
            <person name="Rodriguez R."/>
            <person name="Saenphimmachak C."/>
            <person name="Santibanez J."/>
            <person name="Shen H."/>
            <person name="Shen Y."/>
            <person name="Subramanian S."/>
            <person name="Tabor P.E."/>
            <person name="Verduzco D."/>
            <person name="Waldron L."/>
            <person name="Wang J."/>
            <person name="Wang J."/>
            <person name="Wang Q."/>
            <person name="Williams G.A."/>
            <person name="Wong G.K.-S."/>
            <person name="Yao Z."/>
            <person name="Zhang J."/>
            <person name="Zhang X."/>
            <person name="Zhao G."/>
            <person name="Zhou J."/>
            <person name="Zhou Y."/>
            <person name="Nelson D."/>
            <person name="Lehrach H."/>
            <person name="Reinhardt R."/>
            <person name="Naylor S.L."/>
            <person name="Yang H."/>
            <person name="Olson M."/>
            <person name="Weinstock G."/>
            <person name="Gibbs R.A."/>
        </authorList>
    </citation>
    <scope>NUCLEOTIDE SEQUENCE [LARGE SCALE GENOMIC DNA]</scope>
</reference>
<reference key="8">
    <citation type="submission" date="2005-09" db="EMBL/GenBank/DDBJ databases">
        <authorList>
            <person name="Mural R.J."/>
            <person name="Istrail S."/>
            <person name="Sutton G.G."/>
            <person name="Florea L."/>
            <person name="Halpern A.L."/>
            <person name="Mobarry C.M."/>
            <person name="Lippert R."/>
            <person name="Walenz B."/>
            <person name="Shatkay H."/>
            <person name="Dew I."/>
            <person name="Miller J.R."/>
            <person name="Flanigan M.J."/>
            <person name="Edwards N.J."/>
            <person name="Bolanos R."/>
            <person name="Fasulo D."/>
            <person name="Halldorsson B.V."/>
            <person name="Hannenhalli S."/>
            <person name="Turner R."/>
            <person name="Yooseph S."/>
            <person name="Lu F."/>
            <person name="Nusskern D.R."/>
            <person name="Shue B.C."/>
            <person name="Zheng X.H."/>
            <person name="Zhong F."/>
            <person name="Delcher A.L."/>
            <person name="Huson D.H."/>
            <person name="Kravitz S.A."/>
            <person name="Mouchard L."/>
            <person name="Reinert K."/>
            <person name="Remington K.A."/>
            <person name="Clark A.G."/>
            <person name="Waterman M.S."/>
            <person name="Eichler E.E."/>
            <person name="Adams M.D."/>
            <person name="Hunkapiller M.W."/>
            <person name="Myers E.W."/>
            <person name="Venter J.C."/>
        </authorList>
    </citation>
    <scope>NUCLEOTIDE SEQUENCE [LARGE SCALE GENOMIC DNA]</scope>
</reference>
<reference key="9">
    <citation type="journal article" date="2004" name="Genome Res.">
        <title>The status, quality, and expansion of the NIH full-length cDNA project: the Mammalian Gene Collection (MGC).</title>
        <authorList>
            <consortium name="The MGC Project Team"/>
        </authorList>
    </citation>
    <scope>NUCLEOTIDE SEQUENCE [LARGE SCALE MRNA]</scope>
    <source>
        <tissue>Brain</tissue>
    </source>
</reference>
<reference key="10">
    <citation type="journal article" date="1986" name="Gene">
        <title>The human transferrin gene: 5' region contains conserved sequences which match the control elements regulated by heavy metals, glucocorticoids and acute phase reaction.</title>
        <authorList>
            <person name="Adrian G.S."/>
            <person name="Korinek B.W."/>
            <person name="Bowman B.H."/>
            <person name="Yang F."/>
        </authorList>
    </citation>
    <scope>NUCLEOTIDE SEQUENCE [GENOMIC DNA] OF 1-72 AND 291-300</scope>
</reference>
<reference key="11">
    <citation type="journal article" date="1986" name="Nucleic Acids Res.">
        <title>The 5' region of the human transferrin gene: structure and potential regulatory sites.</title>
        <authorList>
            <person name="Lucero M.A."/>
            <person name="Schaeffer E."/>
            <person name="Cohen G.N."/>
            <person name="Zakin M.M."/>
        </authorList>
    </citation>
    <scope>NUCLEOTIDE SEQUENCE [GENOMIC DNA] OF 1-14</scope>
</reference>
<reference key="12">
    <citation type="journal article" date="1983" name="J. Biol. Chem.">
        <title>The primary structure of human serum transferrin. The structures of seven cyanogen bromide fragments and the assembly of the complete structure.</title>
        <authorList>
            <person name="McGillivray R.T.A."/>
            <person name="Mendez E."/>
            <person name="Shewale J.G."/>
            <person name="Sinha S.K."/>
            <person name="Lineback-Zins J."/>
            <person name="Brew K."/>
        </authorList>
    </citation>
    <scope>PROTEIN SEQUENCE OF 20-698</scope>
</reference>
<reference key="13">
    <citation type="journal article" date="2000" name="J. Neurosci. Res.">
        <title>Alternative splicing prevents transferrin secretion during differentiation of a human oligodendrocyte cell line.</title>
        <authorList>
            <person name="de Arriba Zerpa G.A."/>
            <person name="Saleh M.-C."/>
            <person name="Fernandez P.M."/>
            <person name="Guillou F."/>
            <person name="Espinosa de los Monteros A."/>
            <person name="de Vellis J."/>
            <person name="Zakin M.M."/>
            <person name="Baron B."/>
        </authorList>
    </citation>
    <scope>NUCLEOTIDE SEQUENCE [MRNA] OF 45-72</scope>
</reference>
<reference key="14">
    <citation type="journal article" date="1985" name="Proc. Natl. Acad. Sci. U.S.A.">
        <title>Organization of the human transferrin gene: direct evidence that it originated by gene duplication.</title>
        <authorList>
            <person name="Park I."/>
            <person name="Schaeffer E."/>
            <person name="Sidoli A."/>
            <person name="Baralle F.E."/>
            <person name="Cohen G.N."/>
            <person name="Zakin M.M."/>
        </authorList>
    </citation>
    <scope>NUCLEOTIDE SEQUENCE [GENOMIC DNA] OF 73-698</scope>
</reference>
<reference key="15">
    <citation type="submission" date="1999-01" db="EMBL/GenBank/DDBJ databases">
        <title>Functional prediction of the coding sequences of 33 new genes deduced by analysis of cDNA clones from human fetal liver.</title>
        <authorList>
            <person name="Zhang C."/>
            <person name="Yu Y."/>
            <person name="Zhang S."/>
            <person name="Wei H."/>
            <person name="Zhou G."/>
            <person name="Bi J."/>
            <person name="Zhang Y."/>
            <person name="Liu M."/>
            <person name="He F."/>
        </authorList>
    </citation>
    <scope>NUCLEOTIDE SEQUENCE [LARGE SCALE MRNA] OF 99-698</scope>
    <source>
        <tissue>Fetal liver</tissue>
    </source>
</reference>
<reference key="16">
    <citation type="submission" date="2008-12" db="UniProtKB">
        <authorList>
            <person name="Lubec G."/>
            <person name="Vishwanath V."/>
            <person name="Chen W.-Q."/>
            <person name="Sun Y."/>
        </authorList>
    </citation>
    <scope>PROTEIN SEQUENCE OF 108-121; 259-273; 332-343; 374-384; 434-452; 454-464; 495-508; 531-541; 577-600 AND 684-696</scope>
    <scope>IDENTIFICATION BY MASS SPECTROMETRY</scope>
    <source>
        <tissue>Brain</tissue>
        <tissue>Cajal-Retzius cell</tissue>
        <tissue>Fetal brain cortex</tissue>
    </source>
</reference>
<reference key="17">
    <citation type="journal article" date="1995" name="Electrophoresis">
        <title>The major protein expression profile and two-dimensional protein database of human heart.</title>
        <authorList>
            <person name="Kovalyov L.I."/>
            <person name="Shishkin S.S."/>
            <person name="Efimochkin A.S."/>
            <person name="Kovalyova M.A."/>
            <person name="Ershova E.S."/>
            <person name="Egorov T.A."/>
            <person name="Musalyamov A.K."/>
        </authorList>
    </citation>
    <scope>PROTEIN SEQUENCE OF 263-266; 454-458; 531-538 AND 589-595</scope>
    <source>
        <tissue>Heart</tissue>
    </source>
</reference>
<reference key="18">
    <citation type="journal article" date="1984" name="Biochem. Biophys. Res. Commun.">
        <title>Molecular cloning and sequence analysis of cDNA for human transferrin.</title>
        <authorList>
            <person name="Uzan G."/>
            <person name="Frain M."/>
            <person name="Park I."/>
            <person name="Besmond C."/>
            <person name="Maessen G."/>
            <person name="Trepat J.S."/>
            <person name="Zakin M.M."/>
            <person name="Kahn A."/>
        </authorList>
    </citation>
    <scope>NUCLEOTIDE SEQUENCE [MRNA] OF 422-698</scope>
</reference>
<reference key="19">
    <citation type="journal article" date="1997" name="Hum. Genet.">
        <title>Human transferrin (Tf): a single mutation at codon 570 determines Tf C1 or Tf C2 variant.</title>
        <authorList>
            <person name="Namekata K."/>
            <person name="Oyama F."/>
            <person name="Imagawa M."/>
            <person name="Ihara Y."/>
        </authorList>
    </citation>
    <scope>NUCLEOTIDE SEQUENCE [MRNA] OF 564-624</scope>
    <scope>VARIANT SER-589</scope>
    <source>
        <tissue>Brain</tissue>
    </source>
</reference>
<reference key="20">
    <citation type="submission" date="1998-04" db="EMBL/GenBank/DDBJ databases">
        <authorList>
            <person name="Tsuchida S."/>
            <person name="Ikemoto S."/>
            <person name="Kajii E."/>
        </authorList>
    </citation>
    <scope>NUCLEOTIDE SEQUENCE [GENOMIC DNA] OF 564-624</scope>
</reference>
<reference key="21">
    <citation type="journal article" date="1989" name="Proc. Natl. Acad. Sci. U.S.A.">
        <title>Changes in brain gene expression shared by scrapie and Alzheimer disease.</title>
        <authorList>
            <person name="Duguid J.R."/>
            <person name="Bohmont C.W."/>
            <person name="Liu N.G."/>
            <person name="Tourtellotte W.W."/>
        </authorList>
    </citation>
    <scope>NUCLEOTIDE SEQUENCE [MRNA] OF 636-696</scope>
</reference>
<reference key="22">
    <citation type="journal article" date="1982" name="Proc. Natl. Acad. Sci. U.S.A.">
        <title>The complete amino acid sequence of human serum transferrin.</title>
        <authorList>
            <person name="McGillivray R.T.A."/>
            <person name="Mendez E."/>
            <person name="Sinha S.K."/>
            <person name="Sutton M.R."/>
            <person name="Lineback-Zins J."/>
            <person name="Brew K."/>
        </authorList>
    </citation>
    <scope>DISULFIDE BONDS</scope>
</reference>
<reference key="23">
    <citation type="journal article" date="1991" name="Biochemistry">
        <title>Expression and initial characterization of five site-directed mutants of the N-terminal half-molecule of human transferrin.</title>
        <authorList>
            <person name="Woodworth R.C."/>
            <person name="Mason A.B."/>
            <person name="Funk W.D."/>
            <person name="McGillivray R.T.A."/>
        </authorList>
    </citation>
    <scope>MUTAGENESIS</scope>
</reference>
<reference key="24">
    <citation type="journal article" date="2004" name="Mol. Cell. Proteomics">
        <title>A proteomic analysis of human bile.</title>
        <authorList>
            <person name="Kristiansen T.Z."/>
            <person name="Bunkenborg J."/>
            <person name="Gronborg M."/>
            <person name="Molina H."/>
            <person name="Thuluvath P.J."/>
            <person name="Argani P."/>
            <person name="Goggins M.G."/>
            <person name="Maitra A."/>
            <person name="Pandey A."/>
        </authorList>
    </citation>
    <scope>GLYCOSYLATION [LARGE SCALE ANALYSIS] AT ASN-432 AND ASN-630</scope>
    <source>
        <tissue>Bile</tissue>
    </source>
</reference>
<reference key="25">
    <citation type="journal article" date="2004" name="Proteomics">
        <title>Screening for N-glycosylated proteins by liquid chromatography mass spectrometry.</title>
        <authorList>
            <person name="Bunkenborg J."/>
            <person name="Pilch B.J."/>
            <person name="Podtelejnikov A.V."/>
            <person name="Wisniewski J.R."/>
        </authorList>
    </citation>
    <scope>GLYCOSYLATION [LARGE SCALE ANALYSIS] AT ASN-432 AND ASN-630</scope>
    <source>
        <tissue>Plasma</tissue>
    </source>
</reference>
<reference key="26">
    <citation type="journal article" date="2004" name="Rapid Commun. Mass Spectrom.">
        <title>Site-specific carbohydrate profiling of human transferrin by nano-flow liquid chromatography/electrospray ionization mass spectrometry.</title>
        <authorList>
            <person name="Satomi Y."/>
            <person name="Shimonishi Y."/>
            <person name="Hase T."/>
            <person name="Takao T."/>
        </authorList>
    </citation>
    <scope>GLYCOSYLATION AT ASN-432; ASN-491 AND ASN-630</scope>
</reference>
<reference key="27">
    <citation type="journal article" date="2005" name="J. Proteome Res.">
        <title>Human plasma N-glycoproteome analysis by immunoaffinity subtraction, hydrazide chemistry, and mass spectrometry.</title>
        <authorList>
            <person name="Liu T."/>
            <person name="Qian W.-J."/>
            <person name="Gritsenko M.A."/>
            <person name="Camp D.G. II"/>
            <person name="Monroe M.E."/>
            <person name="Moore R.J."/>
            <person name="Smith R.D."/>
        </authorList>
    </citation>
    <scope>GLYCOSYLATION [LARGE SCALE ANALYSIS] AT ASN-432 AND ASN-630</scope>
    <source>
        <tissue>Plasma</tissue>
    </source>
</reference>
<reference key="28">
    <citation type="journal article" date="2006" name="J. Proteome Res.">
        <title>Identification of N-linked glycoproteins in human saliva by glycoprotein capture and mass spectrometry.</title>
        <authorList>
            <person name="Ramachandran P."/>
            <person name="Boontheung P."/>
            <person name="Xie Y."/>
            <person name="Sondej M."/>
            <person name="Wong D.T."/>
            <person name="Loo J.A."/>
        </authorList>
    </citation>
    <scope>GLYCOSYLATION [LARGE SCALE ANALYSIS] AT ASN-630</scope>
    <source>
        <tissue>Saliva</tissue>
    </source>
</reference>
<reference key="29">
    <citation type="journal article" date="2009" name="J. Proteome Res.">
        <title>Glycoproteomics analysis of human liver tissue by combination of multiple enzyme digestion and hydrazide chemistry.</title>
        <authorList>
            <person name="Chen R."/>
            <person name="Jiang X."/>
            <person name="Sun D."/>
            <person name="Han G."/>
            <person name="Wang F."/>
            <person name="Ye M."/>
            <person name="Wang L."/>
            <person name="Zou H."/>
        </authorList>
    </citation>
    <scope>GLYCOSYLATION [LARGE SCALE ANALYSIS] AT ASN-432 AND ASN-630</scope>
    <source>
        <tissue>Liver</tissue>
    </source>
</reference>
<reference key="30">
    <citation type="journal article" date="2009" name="Mol. Cell. Proteomics">
        <title>A strategy for precise and large scale identification of core fucosylated glycoproteins.</title>
        <authorList>
            <person name="Jia W."/>
            <person name="Lu Z."/>
            <person name="Fu Y."/>
            <person name="Wang H.P."/>
            <person name="Wang L.H."/>
            <person name="Chi H."/>
            <person name="Yuan Z.F."/>
            <person name="Zheng Z.B."/>
            <person name="Song L.N."/>
            <person name="Han H.H."/>
            <person name="Liang Y.M."/>
            <person name="Wang J.L."/>
            <person name="Cai Y."/>
            <person name="Zhang Y.K."/>
            <person name="Deng Y.L."/>
            <person name="Ying W.T."/>
            <person name="He S.M."/>
            <person name="Qian X.H."/>
        </authorList>
    </citation>
    <scope>GLYCOSYLATION AT ASN-630</scope>
</reference>
<reference key="31">
    <citation type="journal article" date="2009" name="Nat. Methods">
        <title>Enrichment of glycopeptides for glycan structure and attachment site identification.</title>
        <authorList>
            <person name="Nilsson J."/>
            <person name="Rueetschi U."/>
            <person name="Halim A."/>
            <person name="Hesse C."/>
            <person name="Carlsohn E."/>
            <person name="Brinkmalm G."/>
            <person name="Larson G."/>
        </authorList>
    </citation>
    <scope>GLYCOSYLATION [LARGE SCALE ANALYSIS] AT ASN-432 AND ASN-630</scope>
    <scope>STRUCTURE OF CARBOHYDRATES</scope>
    <source>
        <tissue>Cerebrospinal fluid</tissue>
    </source>
</reference>
<reference key="32">
    <citation type="journal article" date="2012" name="J. Proteome Res.">
        <title>Resveratrol-induced changes of the human adipocyte secretion profile.</title>
        <authorList>
            <person name="Rosenow A."/>
            <person name="Noben J.P."/>
            <person name="Jocken J."/>
            <person name="Kallendrusch S."/>
            <person name="Fischer-Posovszky P."/>
            <person name="Mariman E.C."/>
            <person name="Renes J."/>
        </authorList>
    </citation>
    <scope>IDENTIFICATION BY MASS SPECTROMETRY [LARGE SCALE ANALYSIS]</scope>
</reference>
<reference key="33">
    <citation type="journal article" date="2014" name="J. Proteomics">
        <title>An enzyme assisted RP-RPLC approach for in-depth analysis of human liver phosphoproteome.</title>
        <authorList>
            <person name="Bian Y."/>
            <person name="Song C."/>
            <person name="Cheng K."/>
            <person name="Dong M."/>
            <person name="Wang F."/>
            <person name="Huang J."/>
            <person name="Sun D."/>
            <person name="Wang L."/>
            <person name="Ye M."/>
            <person name="Zou H."/>
        </authorList>
    </citation>
    <scope>IDENTIFICATION BY MASS SPECTROMETRY [LARGE SCALE ANALYSIS]</scope>
    <source>
        <tissue>Liver</tissue>
    </source>
</reference>
<reference key="34">
    <citation type="journal article" date="2015" name="Cell">
        <title>A single kinase generates the majority of the secreted phosphoproteome.</title>
        <authorList>
            <person name="Tagliabracci V.S."/>
            <person name="Wiley S.E."/>
            <person name="Guo X."/>
            <person name="Kinch L.N."/>
            <person name="Durrant E."/>
            <person name="Wen J."/>
            <person name="Xiao J."/>
            <person name="Cui J."/>
            <person name="Nguyen K.B."/>
            <person name="Engel J.L."/>
            <person name="Coon J.J."/>
            <person name="Grishin N."/>
            <person name="Pinna L.A."/>
            <person name="Pagliarini D.J."/>
            <person name="Dixon J.E."/>
        </authorList>
    </citation>
    <scope>PHOSPHORYLATION AT SER-389 AND SER-685</scope>
</reference>
<reference key="35">
    <citation type="journal article" date="2023" name="J. Biomed. Sci.">
        <title>Apo- and holo-transferrin differentially interact with hephaestin and ferroportin in a novel mechanism of cellular iron release regulation.</title>
        <authorList>
            <person name="Baringer S.L."/>
            <person name="Palsa K."/>
            <person name="Spiegelman V.S."/>
            <person name="Simpson I.A."/>
            <person name="Connor J.R."/>
        </authorList>
    </citation>
    <scope>SUBUNIT</scope>
</reference>
<reference key="36">
    <citation type="journal article" date="1998" name="Biochemistry">
        <title>Two high-resolution crystal structures of the recombinant N-lobe of human transferrin reveal a structural change implicated in iron release.</title>
        <authorList>
            <person name="Macgillivray R.T.A."/>
            <person name="Moore S.A."/>
            <person name="Chen J."/>
            <person name="Anderson B.F."/>
            <person name="Baker H."/>
            <person name="Luo Y."/>
            <person name="Bewley M.C."/>
            <person name="Smith C.A."/>
            <person name="Murphy M.E.P."/>
            <person name="Wang Y."/>
            <person name="Mason A.B."/>
            <person name="Woodworth R.C."/>
            <person name="Brayer G.D."/>
            <person name="Baker E.N."/>
        </authorList>
    </citation>
    <scope>X-RAY CRYSTALLOGRAPHY (1.6 ANGSTROMS) OF 22-350</scope>
</reference>
<reference key="37">
    <citation type="journal article" date="1998" name="Biochemistry">
        <title>Ligand-induced conformational change in transferrins: crystal structure of the open form of the N-terminal half-molecule of human transferrin.</title>
        <authorList>
            <person name="Jeffrey P.D."/>
            <person name="Bewley M.C."/>
            <person name="Macgillivray R.T.A."/>
            <person name="Mason A.B."/>
            <person name="Woodworth R.C."/>
            <person name="Baker E.N."/>
        </authorList>
    </citation>
    <scope>X-RAY CRYSTALLOGRAPHY (2.2 ANGSTROMS) OF 22-350</scope>
</reference>
<reference key="38">
    <citation type="journal article" date="1999" name="Biochemistry">
        <title>X-ray crystallography and mass spectroscopy reveal that the N-lobe of human transferrin expressed in Pichia pastoris is folded correctly but is glycosylated on serine-32.</title>
        <authorList>
            <person name="Bewley M.C."/>
            <person name="Tam B.M."/>
            <person name="Grewal J."/>
            <person name="He S."/>
            <person name="Shewry S."/>
            <person name="Murphy M.E.P."/>
            <person name="Mason A.B."/>
            <person name="Woodworth R.C."/>
            <person name="Baker E.N."/>
            <person name="Macgillivray R.T.A."/>
        </authorList>
    </citation>
    <scope>X-RAY CRYSTALLOGRAPHY (2.5 ANGSTROMS) OF 23-352</scope>
</reference>
<reference evidence="33" key="39">
    <citation type="journal article" date="2012" name="Nat. Struct. Mol. Biol.">
        <title>The structural basis of transferrin sequestration by transferrin-binding protein B.</title>
        <authorList>
            <person name="Calmettes C."/>
            <person name="Alcantara J."/>
            <person name="Yu R.H."/>
            <person name="Schryvers A.B."/>
            <person name="Moraes T.F."/>
        </authorList>
    </citation>
    <scope>X-RAY CRYSTALLOGRAPHY (2.96 ANGSTROMS) OF 20-698 IN COMPLEX WITH IRON AND N.MENINGITIDIS TBPB</scope>
    <scope>FUNCTION (MICROBIAL INFECTION)</scope>
    <scope>SUBUNIT (MICROBIAL INFECTION)</scope>
</reference>
<reference evidence="29 30 31 32" key="40">
    <citation type="journal article" date="2012" name="Nature">
        <title>Structural basis for iron piracy by pathogenic Neisseria.</title>
        <authorList>
            <person name="Noinaj N."/>
            <person name="Easley N.C."/>
            <person name="Oke M."/>
            <person name="Mizuno N."/>
            <person name="Gumbart J."/>
            <person name="Boura E."/>
            <person name="Steere A.N."/>
            <person name="Zak O."/>
            <person name="Aisen P."/>
            <person name="Tajkhorshid E."/>
            <person name="Evans R.W."/>
            <person name="Gorringe A.R."/>
            <person name="Mason A.B."/>
            <person name="Steven A.C."/>
            <person name="Buchanan S.K."/>
        </authorList>
    </citation>
    <scope>X-RAY CRYSTALLOGRAPHY (1.70 ANGSTROMS) OF 358-698 IN COMPLEX WITH IRON AND WITH N.MENINGITIDIS TBPA</scope>
    <scope>FUNCTION (MICROBIAL INFECTION)</scope>
    <scope>SUBUNIT (MICROBIAL INFECTION)</scope>
    <scope>GLYCOSYLATION AT ASN-432 AND ASN-630</scope>
</reference>
<reference evidence="34 35" key="41">
    <citation type="journal article" date="2019" name="Nat. Microbiol.">
        <title>Structure of the trypanosome transferrin receptor reveals mechanisms of ligand recognition and immune evasion.</title>
        <authorList>
            <person name="Trevor C.E."/>
            <person name="Gonzalez-Munoz A.L."/>
            <person name="Macleod O.J.S."/>
            <person name="Woodcock P.G."/>
            <person name="Rust S."/>
            <person name="Vaughan T.J."/>
            <person name="Garman E.F."/>
            <person name="Minter R."/>
            <person name="Carrington M."/>
            <person name="Higgins M.K."/>
        </authorList>
    </citation>
    <scope>X-RAY CRYSTALLOGRAPHY (2.75 ANGSTROMS) OF 22-698 IN COMPLEX WITH IRON; ESAG6 AND ESAG7</scope>
    <scope>FUNCTION</scope>
    <scope>GLYCOSYLATION AT ASN-432</scope>
    <scope>DISULFIDE BONDS</scope>
</reference>
<reference key="42">
    <citation type="journal article" date="1997" name="Gene">
        <title>Exon/intron structure of the human transferrin receptor gene.</title>
        <authorList>
            <person name="Evans P."/>
            <person name="Kemp J."/>
        </authorList>
    </citation>
    <scope>VARIANT SER-142</scope>
</reference>
<reference key="43">
    <citation type="journal article" date="1998" name="Ann. Hum. Genet.">
        <title>Identification of a mutation (A1879G) of transferrin from cDNA prepared from peripheral blood cells.</title>
        <authorList>
            <person name="Pang H."/>
            <person name="Koda Y."/>
            <person name="Soejima M."/>
            <person name="Kimura H."/>
        </authorList>
    </citation>
    <scope>VARIANT GLU-646</scope>
</reference>
<reference key="44">
    <citation type="journal article" date="2001" name="Br. J. Haematol.">
        <title>Human transferrin G277S mutation: a risk factor for iron deficiency anaemia.</title>
        <authorList>
            <person name="Lee P.L."/>
            <person name="Halloran C."/>
            <person name="Trevino R."/>
            <person name="Felitti V."/>
            <person name="Beutler E."/>
        </authorList>
    </citation>
    <scope>VARIANTS SER-277; SER-589 AND GLU-671</scope>
    <scope>CHARACTERIZATION OF VARIANT SER-277</scope>
</reference>
<reference key="45">
    <citation type="journal article" date="2001" name="Hum. Genet.">
        <title>Identification of 96 single nucleotide polymorphisms in eight genes involved in iron metabolism: efficiency of bioinformatic extraction compared with a systematic sequencing approach.</title>
        <authorList>
            <person name="Douabin-Gicquel V."/>
            <person name="Soriano N."/>
            <person name="Ferran H."/>
            <person name="Wojcik F."/>
            <person name="Palierne E."/>
            <person name="Tamim S."/>
            <person name="Jovelin T."/>
            <person name="McKie A.T."/>
            <person name="Le Gall J.-Y."/>
            <person name="David V."/>
            <person name="Mosser J."/>
        </authorList>
    </citation>
    <scope>VARIANTS SER-277 AND SER-589</scope>
</reference>
<reference key="46">
    <citation type="journal article" date="2004" name="Blood">
        <title>Molecular characterization of a third case of human atransferrinemia.</title>
        <authorList>
            <person name="Knisely A.S."/>
            <person name="Gelbart T."/>
            <person name="Beutler E."/>
        </authorList>
    </citation>
    <scope>VARIANT ATRAF ASN-77</scope>
</reference>
<reference key="47">
    <citation type="journal article" date="2011" name="BMC Syst. Biol.">
        <title>Initial characterization of the human central proteome.</title>
        <authorList>
            <person name="Burkard T.R."/>
            <person name="Planyavsky M."/>
            <person name="Kaupe I."/>
            <person name="Breitwieser F.P."/>
            <person name="Buerckstuemmer T."/>
            <person name="Bennett K.L."/>
            <person name="Superti-Furga G."/>
            <person name="Colinge J."/>
        </authorList>
    </citation>
    <scope>VARIANT [LARGE SCALE ANALYSIS] VAL-448</scope>
    <scope>IDENTIFICATION BY MASS SPECTROMETRY [LARGE SCALE ANALYSIS]</scope>
</reference>
<evidence type="ECO:0000250" key="1">
    <source>
        <dbReference type="UniProtKB" id="P12346"/>
    </source>
</evidence>
<evidence type="ECO:0000255" key="2">
    <source>
        <dbReference type="PROSITE-ProRule" id="PRU00741"/>
    </source>
</evidence>
<evidence type="ECO:0000269" key="3">
    <source>
    </source>
</evidence>
<evidence type="ECO:0000269" key="4">
    <source>
    </source>
</evidence>
<evidence type="ECO:0000269" key="5">
    <source>
    </source>
</evidence>
<evidence type="ECO:0000269" key="6">
    <source>
    </source>
</evidence>
<evidence type="ECO:0000269" key="7">
    <source>
    </source>
</evidence>
<evidence type="ECO:0000269" key="8">
    <source>
    </source>
</evidence>
<evidence type="ECO:0000269" key="9">
    <source>
    </source>
</evidence>
<evidence type="ECO:0000269" key="10">
    <source>
    </source>
</evidence>
<evidence type="ECO:0000269" key="11">
    <source>
    </source>
</evidence>
<evidence type="ECO:0000269" key="12">
    <source>
    </source>
</evidence>
<evidence type="ECO:0000269" key="13">
    <source>
    </source>
</evidence>
<evidence type="ECO:0000269" key="14">
    <source>
    </source>
</evidence>
<evidence type="ECO:0000269" key="15">
    <source>
    </source>
</evidence>
<evidence type="ECO:0000269" key="16">
    <source>
    </source>
</evidence>
<evidence type="ECO:0000269" key="17">
    <source>
    </source>
</evidence>
<evidence type="ECO:0000269" key="18">
    <source>
    </source>
</evidence>
<evidence type="ECO:0000269" key="19">
    <source>
    </source>
</evidence>
<evidence type="ECO:0000269" key="20">
    <source>
    </source>
</evidence>
<evidence type="ECO:0000269" key="21">
    <source>
    </source>
</evidence>
<evidence type="ECO:0000269" key="22">
    <source>
    </source>
</evidence>
<evidence type="ECO:0000269" key="23">
    <source>
    </source>
</evidence>
<evidence type="ECO:0000269" key="24">
    <source>
    </source>
</evidence>
<evidence type="ECO:0000269" key="25">
    <source ref="5"/>
</evidence>
<evidence type="ECO:0000305" key="26"/>
<evidence type="ECO:0000305" key="27">
    <source>
    </source>
</evidence>
<evidence type="ECO:0000312" key="28">
    <source>
        <dbReference type="HGNC" id="HGNC:11740"/>
    </source>
</evidence>
<evidence type="ECO:0007744" key="29">
    <source>
        <dbReference type="PDB" id="3SKP"/>
    </source>
</evidence>
<evidence type="ECO:0007744" key="30">
    <source>
        <dbReference type="PDB" id="3V83"/>
    </source>
</evidence>
<evidence type="ECO:0007744" key="31">
    <source>
        <dbReference type="PDB" id="3V89"/>
    </source>
</evidence>
<evidence type="ECO:0007744" key="32">
    <source>
        <dbReference type="PDB" id="3V8X"/>
    </source>
</evidence>
<evidence type="ECO:0007744" key="33">
    <source>
        <dbReference type="PDB" id="3VE1"/>
    </source>
</evidence>
<evidence type="ECO:0007744" key="34">
    <source>
        <dbReference type="PDB" id="6SOY"/>
    </source>
</evidence>
<evidence type="ECO:0007744" key="35">
    <source>
        <dbReference type="PDB" id="6SOZ"/>
    </source>
</evidence>
<evidence type="ECO:0007744" key="36">
    <source>
    </source>
</evidence>
<evidence type="ECO:0007829" key="37">
    <source>
        <dbReference type="PDB" id="1A8E"/>
    </source>
</evidence>
<evidence type="ECO:0007829" key="38">
    <source>
        <dbReference type="PDB" id="1A8F"/>
    </source>
</evidence>
<evidence type="ECO:0007829" key="39">
    <source>
        <dbReference type="PDB" id="1B3E"/>
    </source>
</evidence>
<evidence type="ECO:0007829" key="40">
    <source>
        <dbReference type="PDB" id="1RYO"/>
    </source>
</evidence>
<evidence type="ECO:0007829" key="41">
    <source>
        <dbReference type="PDB" id="2HAU"/>
    </source>
</evidence>
<evidence type="ECO:0007829" key="42">
    <source>
        <dbReference type="PDB" id="2HAV"/>
    </source>
</evidence>
<evidence type="ECO:0007829" key="43">
    <source>
        <dbReference type="PDB" id="3QYT"/>
    </source>
</evidence>
<evidence type="ECO:0007829" key="44">
    <source>
        <dbReference type="PDB" id="3SKP"/>
    </source>
</evidence>
<evidence type="ECO:0007829" key="45">
    <source>
        <dbReference type="PDB" id="3V83"/>
    </source>
</evidence>
<evidence type="ECO:0007829" key="46">
    <source>
        <dbReference type="PDB" id="3V8X"/>
    </source>
</evidence>
<evidence type="ECO:0007829" key="47">
    <source>
        <dbReference type="PDB" id="3VE1"/>
    </source>
</evidence>
<evidence type="ECO:0007829" key="48">
    <source>
        <dbReference type="PDB" id="4H0W"/>
    </source>
</evidence>
<evidence type="ECO:0007829" key="49">
    <source>
        <dbReference type="PDB" id="4X1D"/>
    </source>
</evidence>
<evidence type="ECO:0007829" key="50">
    <source>
        <dbReference type="PDB" id="5DYH"/>
    </source>
</evidence>
<evidence type="ECO:0007829" key="51">
    <source>
        <dbReference type="PDB" id="6JAS"/>
    </source>
</evidence>
<evidence type="ECO:0007829" key="52">
    <source>
        <dbReference type="PDB" id="6SOY"/>
    </source>
</evidence>
<dbReference type="EMBL" id="M12530">
    <property type="protein sequence ID" value="AAA61140.1"/>
    <property type="molecule type" value="mRNA"/>
</dbReference>
<dbReference type="EMBL" id="M17611">
    <property type="protein sequence ID" value="AAA61147.1"/>
    <property type="molecule type" value="Genomic_DNA"/>
</dbReference>
<dbReference type="EMBL" id="M17610">
    <property type="protein sequence ID" value="AAA61147.1"/>
    <property type="status" value="JOINED"/>
    <property type="molecule type" value="Genomic_DNA"/>
</dbReference>
<dbReference type="EMBL" id="M17614">
    <property type="protein sequence ID" value="AAA61148.1"/>
    <property type="molecule type" value="Genomic_DNA"/>
</dbReference>
<dbReference type="EMBL" id="M17612">
    <property type="protein sequence ID" value="AAA61148.1"/>
    <property type="status" value="JOINED"/>
    <property type="molecule type" value="Genomic_DNA"/>
</dbReference>
<dbReference type="EMBL" id="M17613">
    <property type="protein sequence ID" value="AAA61148.1"/>
    <property type="status" value="JOINED"/>
    <property type="molecule type" value="Genomic_DNA"/>
</dbReference>
<dbReference type="EMBL" id="S95936">
    <property type="protein sequence ID" value="AAB22049.1"/>
    <property type="molecule type" value="mRNA"/>
</dbReference>
<dbReference type="EMBL" id="AF288144">
    <property type="protein sequence ID" value="AAK77664.1"/>
    <property type="molecule type" value="Genomic_DNA"/>
</dbReference>
<dbReference type="EMBL" id="AF294270">
    <property type="protein sequence ID" value="AAK77664.1"/>
    <property type="status" value="JOINED"/>
    <property type="molecule type" value="Genomic_DNA"/>
</dbReference>
<dbReference type="EMBL" id="AF294271">
    <property type="protein sequence ID" value="AAK77664.1"/>
    <property type="status" value="JOINED"/>
    <property type="molecule type" value="Genomic_DNA"/>
</dbReference>
<dbReference type="EMBL" id="AF288139">
    <property type="protein sequence ID" value="AAK77664.1"/>
    <property type="status" value="JOINED"/>
    <property type="molecule type" value="Genomic_DNA"/>
</dbReference>
<dbReference type="EMBL" id="AF288140">
    <property type="protein sequence ID" value="AAK77664.1"/>
    <property type="status" value="JOINED"/>
    <property type="molecule type" value="Genomic_DNA"/>
</dbReference>
<dbReference type="EMBL" id="AF288141">
    <property type="protein sequence ID" value="AAK77664.1"/>
    <property type="status" value="JOINED"/>
    <property type="molecule type" value="Genomic_DNA"/>
</dbReference>
<dbReference type="EMBL" id="AF288142">
    <property type="protein sequence ID" value="AAK77664.1"/>
    <property type="status" value="JOINED"/>
    <property type="molecule type" value="Genomic_DNA"/>
</dbReference>
<dbReference type="EMBL" id="AF288143">
    <property type="protein sequence ID" value="AAK77664.1"/>
    <property type="status" value="JOINED"/>
    <property type="molecule type" value="Genomic_DNA"/>
</dbReference>
<dbReference type="EMBL" id="AY308797">
    <property type="protein sequence ID" value="AAP45055.1"/>
    <property type="molecule type" value="Genomic_DNA"/>
</dbReference>
<dbReference type="EMBL" id="DQ525716">
    <property type="protein sequence ID" value="ABF47110.1"/>
    <property type="molecule type" value="Genomic_DNA"/>
</dbReference>
<dbReference type="EMBL" id="AC080128">
    <property type="status" value="NOT_ANNOTATED_CDS"/>
    <property type="molecule type" value="mRNA"/>
</dbReference>
<dbReference type="EMBL" id="AC083905">
    <property type="status" value="NOT_ANNOTATED_CDS"/>
    <property type="molecule type" value="mRNA"/>
</dbReference>
<dbReference type="EMBL" id="CH471052">
    <property type="protein sequence ID" value="EAW79167.1"/>
    <property type="molecule type" value="Genomic_DNA"/>
</dbReference>
<dbReference type="EMBL" id="BC059367">
    <property type="protein sequence ID" value="AAH59367.1"/>
    <property type="molecule type" value="mRNA"/>
</dbReference>
<dbReference type="EMBL" id="M21569">
    <property type="protein sequence ID" value="AAA61143.2"/>
    <property type="molecule type" value="Genomic_DNA"/>
</dbReference>
<dbReference type="EMBL" id="M15673">
    <property type="protein sequence ID" value="AAA61143.2"/>
    <property type="status" value="JOINED"/>
    <property type="molecule type" value="Genomic_DNA"/>
</dbReference>
<dbReference type="EMBL" id="M21570">
    <property type="protein sequence ID" value="AAA61145.1"/>
    <property type="molecule type" value="Genomic_DNA"/>
</dbReference>
<dbReference type="EMBL" id="X04600">
    <property type="protein sequence ID" value="CAA28265.1"/>
    <property type="molecule type" value="Genomic_DNA"/>
</dbReference>
<dbReference type="EMBL" id="AJ252279">
    <property type="protein sequence ID" value="CAB96907.1"/>
    <property type="molecule type" value="mRNA"/>
</dbReference>
<dbReference type="EMBL" id="M11372">
    <property type="protein sequence ID" value="AAA61141.1"/>
    <property type="molecule type" value="Genomic_DNA"/>
</dbReference>
<dbReference type="EMBL" id="M11361">
    <property type="protein sequence ID" value="AAA61141.1"/>
    <property type="status" value="JOINED"/>
    <property type="molecule type" value="Genomic_DNA"/>
</dbReference>
<dbReference type="EMBL" id="M11362">
    <property type="protein sequence ID" value="AAA61141.1"/>
    <property type="status" value="JOINED"/>
    <property type="molecule type" value="Genomic_DNA"/>
</dbReference>
<dbReference type="EMBL" id="M11363">
    <property type="protein sequence ID" value="AAA61141.1"/>
    <property type="status" value="JOINED"/>
    <property type="molecule type" value="Genomic_DNA"/>
</dbReference>
<dbReference type="EMBL" id="M11364">
    <property type="protein sequence ID" value="AAA61141.1"/>
    <property type="status" value="JOINED"/>
    <property type="molecule type" value="Genomic_DNA"/>
</dbReference>
<dbReference type="EMBL" id="M11365">
    <property type="protein sequence ID" value="AAA61141.1"/>
    <property type="status" value="JOINED"/>
    <property type="molecule type" value="Genomic_DNA"/>
</dbReference>
<dbReference type="EMBL" id="M11366">
    <property type="protein sequence ID" value="AAA61141.1"/>
    <property type="status" value="JOINED"/>
    <property type="molecule type" value="Genomic_DNA"/>
</dbReference>
<dbReference type="EMBL" id="M11367">
    <property type="protein sequence ID" value="AAA61141.1"/>
    <property type="status" value="JOINED"/>
    <property type="molecule type" value="Genomic_DNA"/>
</dbReference>
<dbReference type="EMBL" id="M11368">
    <property type="protein sequence ID" value="AAA61141.1"/>
    <property type="status" value="JOINED"/>
    <property type="molecule type" value="Genomic_DNA"/>
</dbReference>
<dbReference type="EMBL" id="M11369">
    <property type="protein sequence ID" value="AAA61141.1"/>
    <property type="status" value="JOINED"/>
    <property type="molecule type" value="Genomic_DNA"/>
</dbReference>
<dbReference type="EMBL" id="M11370">
    <property type="protein sequence ID" value="AAA61141.1"/>
    <property type="status" value="JOINED"/>
    <property type="molecule type" value="Genomic_DNA"/>
</dbReference>
<dbReference type="EMBL" id="M11371">
    <property type="protein sequence ID" value="AAA61141.1"/>
    <property type="status" value="JOINED"/>
    <property type="molecule type" value="Genomic_DNA"/>
</dbReference>
<dbReference type="EMBL" id="AF118063">
    <property type="protein sequence ID" value="AAF22007.1"/>
    <property type="status" value="ALT_INIT"/>
    <property type="molecule type" value="mRNA"/>
</dbReference>
<dbReference type="EMBL" id="M12525">
    <property type="protein sequence ID" value="AAA61142.1"/>
    <property type="molecule type" value="mRNA"/>
</dbReference>
<dbReference type="EMBL" id="U88581">
    <property type="protein sequence ID" value="AAB97880.1"/>
    <property type="molecule type" value="mRNA"/>
</dbReference>
<dbReference type="EMBL" id="AF058327">
    <property type="protein sequence ID" value="AAC63506.1"/>
    <property type="molecule type" value="Genomic_DNA"/>
</dbReference>
<dbReference type="EMBL" id="M26641">
    <property type="protein sequence ID" value="AAA61233.1"/>
    <property type="molecule type" value="mRNA"/>
</dbReference>
<dbReference type="CCDS" id="CCDS3080.1"/>
<dbReference type="PIR" id="A20981">
    <property type="entry name" value="TFHUP"/>
</dbReference>
<dbReference type="RefSeq" id="NP_001054.2">
    <property type="nucleotide sequence ID" value="NM_001063.4"/>
</dbReference>
<dbReference type="RefSeq" id="XP_016862578.1">
    <property type="nucleotide sequence ID" value="XM_017007089.1"/>
</dbReference>
<dbReference type="RefSeq" id="XP_016862579.1">
    <property type="nucleotide sequence ID" value="XM_017007090.1"/>
</dbReference>
<dbReference type="PDB" id="1A8E">
    <property type="method" value="X-ray"/>
    <property type="resolution" value="1.60 A"/>
    <property type="chains" value="A=22-350"/>
</dbReference>
<dbReference type="PDB" id="1A8F">
    <property type="method" value="X-ray"/>
    <property type="resolution" value="1.80 A"/>
    <property type="chains" value="A=22-350"/>
</dbReference>
<dbReference type="PDB" id="1B3E">
    <property type="method" value="X-ray"/>
    <property type="resolution" value="2.50 A"/>
    <property type="chains" value="A=23-352"/>
</dbReference>
<dbReference type="PDB" id="1BP5">
    <property type="method" value="X-ray"/>
    <property type="resolution" value="2.20 A"/>
    <property type="chains" value="A/B/C/D=20-356"/>
</dbReference>
<dbReference type="PDB" id="1BTJ">
    <property type="method" value="X-ray"/>
    <property type="resolution" value="3.20 A"/>
    <property type="chains" value="A/B=20-356"/>
</dbReference>
<dbReference type="PDB" id="1D3K">
    <property type="method" value="X-ray"/>
    <property type="resolution" value="1.80 A"/>
    <property type="chains" value="A=22-350"/>
</dbReference>
<dbReference type="PDB" id="1D4N">
    <property type="method" value="X-ray"/>
    <property type="resolution" value="2.00 A"/>
    <property type="chains" value="A=22-350"/>
</dbReference>
<dbReference type="PDB" id="1DTG">
    <property type="method" value="X-ray"/>
    <property type="resolution" value="2.40 A"/>
    <property type="chains" value="A=20-353"/>
</dbReference>
<dbReference type="PDB" id="1FQE">
    <property type="method" value="X-ray"/>
    <property type="resolution" value="1.80 A"/>
    <property type="chains" value="A=20-350"/>
</dbReference>
<dbReference type="PDB" id="1FQF">
    <property type="method" value="X-ray"/>
    <property type="resolution" value="2.10 A"/>
    <property type="chains" value="A=20-350"/>
</dbReference>
<dbReference type="PDB" id="1JQF">
    <property type="method" value="X-ray"/>
    <property type="resolution" value="1.85 A"/>
    <property type="chains" value="A=20-353"/>
</dbReference>
<dbReference type="PDB" id="1N7W">
    <property type="method" value="X-ray"/>
    <property type="resolution" value="2.20 A"/>
    <property type="chains" value="A=22-350"/>
</dbReference>
<dbReference type="PDB" id="1N7X">
    <property type="method" value="X-ray"/>
    <property type="resolution" value="2.10 A"/>
    <property type="chains" value="A=20-350"/>
</dbReference>
<dbReference type="PDB" id="1N84">
    <property type="method" value="X-ray"/>
    <property type="resolution" value="2.05 A"/>
    <property type="chains" value="A=20-350"/>
</dbReference>
<dbReference type="PDB" id="1OQG">
    <property type="method" value="X-ray"/>
    <property type="resolution" value="1.90 A"/>
    <property type="chains" value="A=20-354"/>
</dbReference>
<dbReference type="PDB" id="1OQH">
    <property type="method" value="X-ray"/>
    <property type="resolution" value="2.40 A"/>
    <property type="chains" value="A=20-354"/>
</dbReference>
<dbReference type="PDB" id="1RYO">
    <property type="method" value="X-ray"/>
    <property type="resolution" value="1.20 A"/>
    <property type="chains" value="A=20-346"/>
</dbReference>
<dbReference type="PDB" id="1SUV">
    <property type="method" value="EM"/>
    <property type="resolution" value="7.50 A"/>
    <property type="chains" value="C/D=22-350"/>
</dbReference>
<dbReference type="PDB" id="2HAU">
    <property type="method" value="X-ray"/>
    <property type="resolution" value="2.70 A"/>
    <property type="chains" value="A/B=23-698"/>
</dbReference>
<dbReference type="PDB" id="2HAV">
    <property type="method" value="X-ray"/>
    <property type="resolution" value="2.70 A"/>
    <property type="chains" value="A/B=23-698"/>
</dbReference>
<dbReference type="PDB" id="2O7U">
    <property type="method" value="X-ray"/>
    <property type="resolution" value="2.80 A"/>
    <property type="chains" value="A/B/C/D/E/F/G/H/I=20-356"/>
</dbReference>
<dbReference type="PDB" id="2O84">
    <property type="method" value="X-ray"/>
    <property type="resolution" value="2.60 A"/>
    <property type="chains" value="X=20-356"/>
</dbReference>
<dbReference type="PDB" id="3FGS">
    <property type="method" value="X-ray"/>
    <property type="resolution" value="1.80 A"/>
    <property type="chains" value="A=20-356"/>
</dbReference>
<dbReference type="PDB" id="3QYT">
    <property type="method" value="X-ray"/>
    <property type="resolution" value="2.80 A"/>
    <property type="chains" value="A=20-698"/>
</dbReference>
<dbReference type="PDB" id="3S9L">
    <property type="method" value="X-ray"/>
    <property type="resolution" value="3.22 A"/>
    <property type="chains" value="C/D=20-698"/>
</dbReference>
<dbReference type="PDB" id="3S9M">
    <property type="method" value="X-ray"/>
    <property type="resolution" value="3.32 A"/>
    <property type="chains" value="C/D=20-698"/>
</dbReference>
<dbReference type="PDB" id="3S9N">
    <property type="method" value="X-ray"/>
    <property type="resolution" value="3.25 A"/>
    <property type="chains" value="C/D=20-698"/>
</dbReference>
<dbReference type="PDB" id="3SKP">
    <property type="method" value="X-ray"/>
    <property type="resolution" value="1.70 A"/>
    <property type="chains" value="A=358-698"/>
</dbReference>
<dbReference type="PDB" id="3V83">
    <property type="method" value="X-ray"/>
    <property type="resolution" value="2.10 A"/>
    <property type="chains" value="A/B/C/D/E/F=1-698"/>
</dbReference>
<dbReference type="PDB" id="3V89">
    <property type="method" value="X-ray"/>
    <property type="resolution" value="3.10 A"/>
    <property type="chains" value="B=356-698"/>
</dbReference>
<dbReference type="PDB" id="3V8X">
    <property type="method" value="X-ray"/>
    <property type="resolution" value="2.60 A"/>
    <property type="chains" value="B=1-698"/>
</dbReference>
<dbReference type="PDB" id="3VE1">
    <property type="method" value="X-ray"/>
    <property type="resolution" value="2.96 A"/>
    <property type="chains" value="B/D=20-698"/>
</dbReference>
<dbReference type="PDB" id="4H0W">
    <property type="method" value="X-ray"/>
    <property type="resolution" value="2.40 A"/>
    <property type="chains" value="A=20-698"/>
</dbReference>
<dbReference type="PDB" id="4X1B">
    <property type="method" value="X-ray"/>
    <property type="resolution" value="2.45 A"/>
    <property type="chains" value="A=20-698"/>
</dbReference>
<dbReference type="PDB" id="4X1D">
    <property type="method" value="X-ray"/>
    <property type="resolution" value="2.80 A"/>
    <property type="chains" value="A/B=20-698"/>
</dbReference>
<dbReference type="PDB" id="5DYH">
    <property type="method" value="X-ray"/>
    <property type="resolution" value="2.68 A"/>
    <property type="chains" value="A/B=1-698"/>
</dbReference>
<dbReference type="PDB" id="5H52">
    <property type="method" value="X-ray"/>
    <property type="resolution" value="3.00 A"/>
    <property type="chains" value="A=20-698"/>
</dbReference>
<dbReference type="PDB" id="5WTD">
    <property type="method" value="X-ray"/>
    <property type="resolution" value="2.50 A"/>
    <property type="chains" value="A=20-698"/>
</dbReference>
<dbReference type="PDB" id="5X5P">
    <property type="method" value="X-ray"/>
    <property type="resolution" value="2.70 A"/>
    <property type="chains" value="A=20-698"/>
</dbReference>
<dbReference type="PDB" id="5Y6K">
    <property type="method" value="X-ray"/>
    <property type="resolution" value="2.86 A"/>
    <property type="chains" value="A=20-698"/>
</dbReference>
<dbReference type="PDB" id="6CTC">
    <property type="method" value="X-ray"/>
    <property type="resolution" value="2.60 A"/>
    <property type="chains" value="A=20-698"/>
</dbReference>
<dbReference type="PDB" id="6D03">
    <property type="method" value="EM"/>
    <property type="resolution" value="3.68 A"/>
    <property type="chains" value="C/D=1-698"/>
</dbReference>
<dbReference type="PDB" id="6D04">
    <property type="method" value="EM"/>
    <property type="resolution" value="3.74 A"/>
    <property type="chains" value="C/D=1-698"/>
</dbReference>
<dbReference type="PDB" id="6D05">
    <property type="method" value="EM"/>
    <property type="resolution" value="3.80 A"/>
    <property type="chains" value="C/D=1-698"/>
</dbReference>
<dbReference type="PDB" id="6JAS">
    <property type="method" value="X-ray"/>
    <property type="resolution" value="2.50 A"/>
    <property type="chains" value="A=20-698"/>
</dbReference>
<dbReference type="PDB" id="6SOY">
    <property type="method" value="X-ray"/>
    <property type="resolution" value="2.75 A"/>
    <property type="chains" value="C=22-698"/>
</dbReference>
<dbReference type="PDB" id="6SOZ">
    <property type="method" value="X-ray"/>
    <property type="resolution" value="3.42 A"/>
    <property type="chains" value="C=22-698"/>
</dbReference>
<dbReference type="PDB" id="6UJ6">
    <property type="method" value="X-ray"/>
    <property type="resolution" value="2.68 A"/>
    <property type="chains" value="A=1-698"/>
</dbReference>
<dbReference type="PDB" id="7FFM">
    <property type="method" value="X-ray"/>
    <property type="resolution" value="3.06 A"/>
    <property type="chains" value="A=20-698"/>
</dbReference>
<dbReference type="PDB" id="7FFU">
    <property type="method" value="X-ray"/>
    <property type="resolution" value="2.60 A"/>
    <property type="chains" value="A=20-698"/>
</dbReference>
<dbReference type="PDB" id="7Q1L">
    <property type="method" value="X-ray"/>
    <property type="resolution" value="3.00 A"/>
    <property type="chains" value="A/B=23-698"/>
</dbReference>
<dbReference type="PDB" id="8BRC">
    <property type="method" value="X-ray"/>
    <property type="resolution" value="3.17 A"/>
    <property type="chains" value="A=20-698"/>
</dbReference>
<dbReference type="PDB" id="9H49">
    <property type="method" value="X-ray"/>
    <property type="resolution" value="3.52 A"/>
    <property type="chains" value="A/B=20-698"/>
</dbReference>
<dbReference type="PDB" id="9H4V">
    <property type="method" value="X-ray"/>
    <property type="resolution" value="3.02 A"/>
    <property type="chains" value="A/B=20-698"/>
</dbReference>
<dbReference type="PDBsum" id="1A8E"/>
<dbReference type="PDBsum" id="1A8F"/>
<dbReference type="PDBsum" id="1B3E"/>
<dbReference type="PDBsum" id="1BP5"/>
<dbReference type="PDBsum" id="1BTJ"/>
<dbReference type="PDBsum" id="1D3K"/>
<dbReference type="PDBsum" id="1D4N"/>
<dbReference type="PDBsum" id="1DTG"/>
<dbReference type="PDBsum" id="1FQE"/>
<dbReference type="PDBsum" id="1FQF"/>
<dbReference type="PDBsum" id="1JQF"/>
<dbReference type="PDBsum" id="1N7W"/>
<dbReference type="PDBsum" id="1N7X"/>
<dbReference type="PDBsum" id="1N84"/>
<dbReference type="PDBsum" id="1OQG"/>
<dbReference type="PDBsum" id="1OQH"/>
<dbReference type="PDBsum" id="1RYO"/>
<dbReference type="PDBsum" id="1SUV"/>
<dbReference type="PDBsum" id="2HAU"/>
<dbReference type="PDBsum" id="2HAV"/>
<dbReference type="PDBsum" id="2O7U"/>
<dbReference type="PDBsum" id="2O84"/>
<dbReference type="PDBsum" id="3FGS"/>
<dbReference type="PDBsum" id="3QYT"/>
<dbReference type="PDBsum" id="3S9L"/>
<dbReference type="PDBsum" id="3S9M"/>
<dbReference type="PDBsum" id="3S9N"/>
<dbReference type="PDBsum" id="3SKP"/>
<dbReference type="PDBsum" id="3V83"/>
<dbReference type="PDBsum" id="3V89"/>
<dbReference type="PDBsum" id="3V8X"/>
<dbReference type="PDBsum" id="3VE1"/>
<dbReference type="PDBsum" id="4H0W"/>
<dbReference type="PDBsum" id="4X1B"/>
<dbReference type="PDBsum" id="4X1D"/>
<dbReference type="PDBsum" id="5DYH"/>
<dbReference type="PDBsum" id="5H52"/>
<dbReference type="PDBsum" id="5WTD"/>
<dbReference type="PDBsum" id="5X5P"/>
<dbReference type="PDBsum" id="5Y6K"/>
<dbReference type="PDBsum" id="6CTC"/>
<dbReference type="PDBsum" id="6D03"/>
<dbReference type="PDBsum" id="6D04"/>
<dbReference type="PDBsum" id="6D05"/>
<dbReference type="PDBsum" id="6JAS"/>
<dbReference type="PDBsum" id="6SOY"/>
<dbReference type="PDBsum" id="6SOZ"/>
<dbReference type="PDBsum" id="6UJ6"/>
<dbReference type="PDBsum" id="7FFM"/>
<dbReference type="PDBsum" id="7FFU"/>
<dbReference type="PDBsum" id="7Q1L"/>
<dbReference type="PDBsum" id="8BRC"/>
<dbReference type="PDBsum" id="9H49"/>
<dbReference type="PDBsum" id="9H4V"/>
<dbReference type="EMDB" id="EMD-7783"/>
<dbReference type="EMDB" id="EMD-7784"/>
<dbReference type="EMDB" id="EMD-7785"/>
<dbReference type="SASBDB" id="P02787"/>
<dbReference type="SMR" id="P02787"/>
<dbReference type="BioGRID" id="112876">
    <property type="interactions" value="220"/>
</dbReference>
<dbReference type="CORUM" id="P02787"/>
<dbReference type="DIP" id="DIP-2738N"/>
<dbReference type="FunCoup" id="P02787">
    <property type="interactions" value="925"/>
</dbReference>
<dbReference type="IntAct" id="P02787">
    <property type="interactions" value="132"/>
</dbReference>
<dbReference type="MINT" id="P02787"/>
<dbReference type="STRING" id="9606.ENSP00000385834"/>
<dbReference type="ChEMBL" id="CHEMBL4865"/>
<dbReference type="DrugBank" id="DB01370">
    <property type="generic name" value="Aluminium"/>
</dbReference>
<dbReference type="DrugBank" id="DB14517">
    <property type="generic name" value="Aluminium phosphate"/>
</dbReference>
<dbReference type="DrugBank" id="DB14518">
    <property type="generic name" value="Aluminum acetate"/>
</dbReference>
<dbReference type="DrugBank" id="DB01294">
    <property type="generic name" value="Bismuth subsalicylate"/>
</dbReference>
<dbReference type="DrugBank" id="DB14526">
    <property type="generic name" value="Chromic citrate"/>
</dbReference>
<dbReference type="DrugBank" id="DB14527">
    <property type="generic name" value="Chromic nitrate"/>
</dbReference>
<dbReference type="DrugBank" id="DB11136">
    <property type="generic name" value="Chromium"/>
</dbReference>
<dbReference type="DrugBank" id="DB14528">
    <property type="generic name" value="Chromium gluconate"/>
</dbReference>
<dbReference type="DrugBank" id="DB14529">
    <property type="generic name" value="Chromium nicotinate"/>
</dbReference>
<dbReference type="DrugBank" id="DB14530">
    <property type="generic name" value="Chromous sulfate"/>
</dbReference>
<dbReference type="DrugBank" id="DB00515">
    <property type="generic name" value="Cisplatin"/>
</dbReference>
<dbReference type="DrugBank" id="DB09130">
    <property type="generic name" value="Copper"/>
</dbReference>
<dbReference type="DrugBank" id="DB11397">
    <property type="generic name" value="Dichlorvos"/>
</dbReference>
<dbReference type="DrugBank" id="DB13949">
    <property type="generic name" value="Ferric cation"/>
</dbReference>
<dbReference type="DrugBank" id="DB14490">
    <property type="generic name" value="Ferrous ascorbate"/>
</dbReference>
<dbReference type="DrugBank" id="DB14491">
    <property type="generic name" value="Ferrous fumarate"/>
</dbReference>
<dbReference type="DrugBank" id="DB14488">
    <property type="generic name" value="Ferrous gluconate"/>
</dbReference>
<dbReference type="DrugBank" id="DB14501">
    <property type="generic name" value="Ferrous glycine sulfate"/>
</dbReference>
<dbReference type="DrugBank" id="DB14489">
    <property type="generic name" value="Ferrous succinate"/>
</dbReference>
<dbReference type="DrugBank" id="DB13257">
    <property type="generic name" value="Ferrous sulfate anhydrous"/>
</dbReference>
<dbReference type="DrugBank" id="DB06215">
    <property type="generic name" value="Ferumoxytol"/>
</dbReference>
<dbReference type="DrugBank" id="DB06784">
    <property type="generic name" value="Gallium citrate Ga-67"/>
</dbReference>
<dbReference type="DrugBank" id="DB05260">
    <property type="generic name" value="Gallium nitrate"/>
</dbReference>
<dbReference type="DrugBank" id="DB01592">
    <property type="generic name" value="Iron"/>
</dbReference>
<dbReference type="DrugBank" id="DB00893">
    <property type="generic name" value="Iron Dextran"/>
</dbReference>
<dbReference type="DrugBank" id="DB00677">
    <property type="generic name" value="Isoflurophate"/>
</dbReference>
<dbReference type="DrugBank" id="DB06757">
    <property type="generic name" value="Manganese cation"/>
</dbReference>
<dbReference type="DrugBank" id="DB11182">
    <property type="generic name" value="Rose bengal"/>
</dbReference>
<dbReference type="DrugBank" id="DB14520">
    <property type="generic name" value="Tetraferric tricitrate decahydrate"/>
</dbReference>
<dbReference type="DrugBank" id="DB01593">
    <property type="generic name" value="Zinc"/>
</dbReference>
<dbReference type="DrugBank" id="DB14487">
    <property type="generic name" value="Zinc acetate"/>
</dbReference>
<dbReference type="DrugBank" id="DB14533">
    <property type="generic name" value="Zinc chloride"/>
</dbReference>
<dbReference type="DrugBank" id="DB14548">
    <property type="generic name" value="Zinc sulfate, unspecified form"/>
</dbReference>
<dbReference type="DrugCentral" id="P02787"/>
<dbReference type="MEROPS" id="S60.972"/>
<dbReference type="MEROPS" id="S60.975"/>
<dbReference type="CarbonylDB" id="P02787"/>
<dbReference type="GlyConnect" id="558">
    <property type="glycosylation" value="125 N-Linked glycans (3 sites), 3 O-Linked glycans (1 site)"/>
</dbReference>
<dbReference type="GlyCosmos" id="P02787">
    <property type="glycosylation" value="7 sites, 144 glycans"/>
</dbReference>
<dbReference type="GlyGen" id="P02787">
    <property type="glycosylation" value="10 sites, 287 N-linked glycans (6 sites), 6 O-linked glycans (2 sites)"/>
</dbReference>
<dbReference type="iPTMnet" id="P02787"/>
<dbReference type="PhosphoSitePlus" id="P02787"/>
<dbReference type="SwissPalm" id="P02787"/>
<dbReference type="BioMuta" id="TF"/>
<dbReference type="DMDM" id="313104271"/>
<dbReference type="REPRODUCTION-2DPAGE" id="IPI00022463"/>
<dbReference type="REPRODUCTION-2DPAGE" id="P02787"/>
<dbReference type="CPTAC" id="non-CPTAC-1157"/>
<dbReference type="CPTAC" id="non-CPTAC-1159"/>
<dbReference type="jPOST" id="P02787"/>
<dbReference type="MassIVE" id="P02787"/>
<dbReference type="PaxDb" id="9606-ENSP00000385834"/>
<dbReference type="PeptideAtlas" id="P02787"/>
<dbReference type="PRIDE" id="P02787"/>
<dbReference type="ProteomicsDB" id="51596"/>
<dbReference type="TopDownProteomics" id="P02787"/>
<dbReference type="ABCD" id="P02787">
    <property type="antibodies" value="1 sequenced antibody"/>
</dbReference>
<dbReference type="Antibodypedia" id="873">
    <property type="antibodies" value="1847 antibodies from 44 providers"/>
</dbReference>
<dbReference type="DNASU" id="7018"/>
<dbReference type="Ensembl" id="ENST00000402696.9">
    <property type="protein sequence ID" value="ENSP00000385834.3"/>
    <property type="gene ID" value="ENSG00000091513.16"/>
</dbReference>
<dbReference type="GeneID" id="7018"/>
<dbReference type="KEGG" id="hsa:7018"/>
<dbReference type="MANE-Select" id="ENST00000402696.9">
    <property type="protein sequence ID" value="ENSP00000385834.3"/>
    <property type="RefSeq nucleotide sequence ID" value="NM_001063.4"/>
    <property type="RefSeq protein sequence ID" value="NP_001054.2"/>
</dbReference>
<dbReference type="UCSC" id="uc003epv.2">
    <property type="organism name" value="human"/>
</dbReference>
<dbReference type="AGR" id="HGNC:11740"/>
<dbReference type="CTD" id="7018"/>
<dbReference type="DisGeNET" id="7018"/>
<dbReference type="GeneCards" id="TF"/>
<dbReference type="HGNC" id="HGNC:11740">
    <property type="gene designation" value="TF"/>
</dbReference>
<dbReference type="HPA" id="ENSG00000091513">
    <property type="expression patterns" value="Tissue enhanced (brain, liver, retina)"/>
</dbReference>
<dbReference type="MalaCards" id="TF"/>
<dbReference type="MIM" id="190000">
    <property type="type" value="gene"/>
</dbReference>
<dbReference type="MIM" id="209300">
    <property type="type" value="phenotype"/>
</dbReference>
<dbReference type="neXtProt" id="NX_P02787"/>
<dbReference type="OpenTargets" id="ENSG00000091513"/>
<dbReference type="Orphanet" id="1195">
    <property type="disease" value="Congenital atransferrinemia"/>
</dbReference>
<dbReference type="PharmGKB" id="PA36457"/>
<dbReference type="VEuPathDB" id="HostDB:ENSG00000091513"/>
<dbReference type="eggNOG" id="ENOG502QT0C">
    <property type="taxonomic scope" value="Eukaryota"/>
</dbReference>
<dbReference type="GeneTree" id="ENSGT00940000154388"/>
<dbReference type="HOGENOM" id="CLU_011309_1_0_1"/>
<dbReference type="InParanoid" id="P02787"/>
<dbReference type="OrthoDB" id="41266at2759"/>
<dbReference type="PAN-GO" id="P02787">
    <property type="GO annotations" value="6 GO annotations based on evolutionary models"/>
</dbReference>
<dbReference type="PhylomeDB" id="P02787"/>
<dbReference type="TreeFam" id="TF324013"/>
<dbReference type="PathwayCommons" id="P02787"/>
<dbReference type="Reactome" id="R-HSA-114608">
    <property type="pathway name" value="Platelet degranulation"/>
</dbReference>
<dbReference type="Reactome" id="R-HSA-381426">
    <property type="pathway name" value="Regulation of Insulin-like Growth Factor (IGF) transport and uptake by Insulin-like Growth Factor Binding Proteins (IGFBPs)"/>
</dbReference>
<dbReference type="Reactome" id="R-HSA-8856825">
    <property type="pathway name" value="Cargo recognition for clathrin-mediated endocytosis"/>
</dbReference>
<dbReference type="Reactome" id="R-HSA-8856828">
    <property type="pathway name" value="Clathrin-mediated endocytosis"/>
</dbReference>
<dbReference type="Reactome" id="R-HSA-8957275">
    <property type="pathway name" value="Post-translational protein phosphorylation"/>
</dbReference>
<dbReference type="Reactome" id="R-HSA-917937">
    <property type="pathway name" value="Iron uptake and transport"/>
</dbReference>
<dbReference type="Reactome" id="R-HSA-917977">
    <property type="pathway name" value="Transferrin endocytosis and recycling"/>
</dbReference>
<dbReference type="SignaLink" id="P02787"/>
<dbReference type="SIGNOR" id="P02787"/>
<dbReference type="BioGRID-ORCS" id="7018">
    <property type="hits" value="18 hits in 1166 CRISPR screens"/>
</dbReference>
<dbReference type="CD-CODE" id="232F8A39">
    <property type="entry name" value="P-body"/>
</dbReference>
<dbReference type="ChiTaRS" id="TF">
    <property type="organism name" value="human"/>
</dbReference>
<dbReference type="EvolutionaryTrace" id="P02787"/>
<dbReference type="GeneWiki" id="Transferrin"/>
<dbReference type="GenomeRNAi" id="7018"/>
<dbReference type="Pharos" id="P02787">
    <property type="development level" value="Tbio"/>
</dbReference>
<dbReference type="PRO" id="PR:P02787"/>
<dbReference type="Proteomes" id="UP000005640">
    <property type="component" value="Chromosome 3"/>
</dbReference>
<dbReference type="RNAct" id="P02787">
    <property type="molecule type" value="protein"/>
</dbReference>
<dbReference type="Bgee" id="ENSG00000091513">
    <property type="expression patterns" value="Expressed in inferior vagus X ganglion and 177 other cell types or tissues"/>
</dbReference>
<dbReference type="ExpressionAtlas" id="P02787">
    <property type="expression patterns" value="baseline and differential"/>
</dbReference>
<dbReference type="GO" id="GO:0016324">
    <property type="term" value="C:apical plasma membrane"/>
    <property type="evidence" value="ECO:0000314"/>
    <property type="project" value="UniProtKB"/>
</dbReference>
<dbReference type="GO" id="GO:0045178">
    <property type="term" value="C:basal part of cell"/>
    <property type="evidence" value="ECO:0000314"/>
    <property type="project" value="UniProtKB"/>
</dbReference>
<dbReference type="GO" id="GO:0009925">
    <property type="term" value="C:basal plasma membrane"/>
    <property type="evidence" value="ECO:0000314"/>
    <property type="project" value="UniProtKB"/>
</dbReference>
<dbReference type="GO" id="GO:0072562">
    <property type="term" value="C:blood microparticle"/>
    <property type="evidence" value="ECO:0007005"/>
    <property type="project" value="UniProtKB"/>
</dbReference>
<dbReference type="GO" id="GO:0009986">
    <property type="term" value="C:cell surface"/>
    <property type="evidence" value="ECO:0000314"/>
    <property type="project" value="UniProtKB"/>
</dbReference>
<dbReference type="GO" id="GO:0030669">
    <property type="term" value="C:clathrin-coated endocytic vesicle membrane"/>
    <property type="evidence" value="ECO:0000304"/>
    <property type="project" value="Reactome"/>
</dbReference>
<dbReference type="GO" id="GO:0005905">
    <property type="term" value="C:clathrin-coated pit"/>
    <property type="evidence" value="ECO:0000314"/>
    <property type="project" value="UniProtKB"/>
</dbReference>
<dbReference type="GO" id="GO:0031410">
    <property type="term" value="C:cytoplasmic vesicle"/>
    <property type="evidence" value="ECO:0000314"/>
    <property type="project" value="UniProtKB"/>
</dbReference>
<dbReference type="GO" id="GO:0005769">
    <property type="term" value="C:early endosome"/>
    <property type="evidence" value="ECO:0000314"/>
    <property type="project" value="UniProtKB"/>
</dbReference>
<dbReference type="GO" id="GO:0030139">
    <property type="term" value="C:endocytic vesicle"/>
    <property type="evidence" value="ECO:0000314"/>
    <property type="project" value="MGI"/>
</dbReference>
<dbReference type="GO" id="GO:0005788">
    <property type="term" value="C:endoplasmic reticulum lumen"/>
    <property type="evidence" value="ECO:0000304"/>
    <property type="project" value="Reactome"/>
</dbReference>
<dbReference type="GO" id="GO:0010008">
    <property type="term" value="C:endosome membrane"/>
    <property type="evidence" value="ECO:0000304"/>
    <property type="project" value="Reactome"/>
</dbReference>
<dbReference type="GO" id="GO:0070062">
    <property type="term" value="C:extracellular exosome"/>
    <property type="evidence" value="ECO:0007005"/>
    <property type="project" value="UniProtKB"/>
</dbReference>
<dbReference type="GO" id="GO:0005576">
    <property type="term" value="C:extracellular region"/>
    <property type="evidence" value="ECO:0000314"/>
    <property type="project" value="BHF-UCL"/>
</dbReference>
<dbReference type="GO" id="GO:0005615">
    <property type="term" value="C:extracellular space"/>
    <property type="evidence" value="ECO:0000314"/>
    <property type="project" value="UniProt"/>
</dbReference>
<dbReference type="GO" id="GO:1990712">
    <property type="term" value="C:HFE-transferrin receptor complex"/>
    <property type="evidence" value="ECO:0000314"/>
    <property type="project" value="BHF-UCL"/>
</dbReference>
<dbReference type="GO" id="GO:0005770">
    <property type="term" value="C:late endosome"/>
    <property type="evidence" value="ECO:0000314"/>
    <property type="project" value="UniProtKB"/>
</dbReference>
<dbReference type="GO" id="GO:0048471">
    <property type="term" value="C:perinuclear region of cytoplasm"/>
    <property type="evidence" value="ECO:0000314"/>
    <property type="project" value="UniProtKB"/>
</dbReference>
<dbReference type="GO" id="GO:0005886">
    <property type="term" value="C:plasma membrane"/>
    <property type="evidence" value="ECO:0000318"/>
    <property type="project" value="GO_Central"/>
</dbReference>
<dbReference type="GO" id="GO:0055037">
    <property type="term" value="C:recycling endosome"/>
    <property type="evidence" value="ECO:0000314"/>
    <property type="project" value="UniProtKB"/>
</dbReference>
<dbReference type="GO" id="GO:0034774">
    <property type="term" value="C:secretory granule lumen"/>
    <property type="evidence" value="ECO:0000304"/>
    <property type="project" value="Reactome"/>
</dbReference>
<dbReference type="GO" id="GO:0031982">
    <property type="term" value="C:vesicle"/>
    <property type="evidence" value="ECO:0000314"/>
    <property type="project" value="UniProtKB"/>
</dbReference>
<dbReference type="GO" id="GO:0019899">
    <property type="term" value="F:enzyme binding"/>
    <property type="evidence" value="ECO:0000353"/>
    <property type="project" value="UniProtKB"/>
</dbReference>
<dbReference type="GO" id="GO:0008199">
    <property type="term" value="F:ferric iron binding"/>
    <property type="evidence" value="ECO:0007669"/>
    <property type="project" value="InterPro"/>
</dbReference>
<dbReference type="GO" id="GO:0008198">
    <property type="term" value="F:ferrous iron binding"/>
    <property type="evidence" value="ECO:0000314"/>
    <property type="project" value="BHF-UCL"/>
</dbReference>
<dbReference type="GO" id="GO:0034986">
    <property type="term" value="F:iron chaperone activity"/>
    <property type="evidence" value="ECO:0000314"/>
    <property type="project" value="BHF-UCL"/>
</dbReference>
<dbReference type="GO" id="GO:1990459">
    <property type="term" value="F:transferrin receptor binding"/>
    <property type="evidence" value="ECO:0000353"/>
    <property type="project" value="BHF-UCL"/>
</dbReference>
<dbReference type="GO" id="GO:0044325">
    <property type="term" value="F:transmembrane transporter binding"/>
    <property type="evidence" value="ECO:0000353"/>
    <property type="project" value="UniProtKB"/>
</dbReference>
<dbReference type="GO" id="GO:0019731">
    <property type="term" value="P:antibacterial humoral response"/>
    <property type="evidence" value="ECO:0000318"/>
    <property type="project" value="GO_Central"/>
</dbReference>
<dbReference type="GO" id="GO:0071281">
    <property type="term" value="P:cellular response to iron ion"/>
    <property type="evidence" value="ECO:0000316"/>
    <property type="project" value="BHF-UCL"/>
</dbReference>
<dbReference type="GO" id="GO:0006879">
    <property type="term" value="P:intracellular iron ion homeostasis"/>
    <property type="evidence" value="ECO:0000316"/>
    <property type="project" value="BHF-UCL"/>
</dbReference>
<dbReference type="GO" id="GO:0006826">
    <property type="term" value="P:iron ion transport"/>
    <property type="evidence" value="ECO:0000318"/>
    <property type="project" value="GO_Central"/>
</dbReference>
<dbReference type="GO" id="GO:0060586">
    <property type="term" value="P:multicellular organismal-level iron ion homeostasis"/>
    <property type="evidence" value="ECO:0000315"/>
    <property type="project" value="UniProt"/>
</dbReference>
<dbReference type="GO" id="GO:0030316">
    <property type="term" value="P:osteoclast differentiation"/>
    <property type="evidence" value="ECO:0007669"/>
    <property type="project" value="Ensembl"/>
</dbReference>
<dbReference type="GO" id="GO:0032436">
    <property type="term" value="P:positive regulation of proteasomal ubiquitin-dependent protein catabolic process"/>
    <property type="evidence" value="ECO:0000314"/>
    <property type="project" value="UniProtKB"/>
</dbReference>
<dbReference type="GO" id="GO:0048260">
    <property type="term" value="P:positive regulation of receptor-mediated endocytosis"/>
    <property type="evidence" value="ECO:0000314"/>
    <property type="project" value="BHF-UCL"/>
</dbReference>
<dbReference type="GO" id="GO:0034756">
    <property type="term" value="P:regulation of iron ion transport"/>
    <property type="evidence" value="ECO:0000316"/>
    <property type="project" value="BHF-UCL"/>
</dbReference>
<dbReference type="GO" id="GO:0031647">
    <property type="term" value="P:regulation of protein stability"/>
    <property type="evidence" value="ECO:0000304"/>
    <property type="project" value="BHF-UCL"/>
</dbReference>
<dbReference type="CDD" id="cd13617">
    <property type="entry name" value="PBP2_transferrin_C"/>
    <property type="match status" value="1"/>
</dbReference>
<dbReference type="CDD" id="cd13618">
    <property type="entry name" value="PBP2_transferrin_N"/>
    <property type="match status" value="1"/>
</dbReference>
<dbReference type="FunFam" id="3.40.190.10:FF:000095">
    <property type="entry name" value="Lactotransferrin"/>
    <property type="match status" value="1"/>
</dbReference>
<dbReference type="FunFam" id="3.40.190.10:FF:000105">
    <property type="entry name" value="Serotransferrin"/>
    <property type="match status" value="1"/>
</dbReference>
<dbReference type="Gene3D" id="3.40.190.10">
    <property type="entry name" value="Periplasmic binding protein-like II"/>
    <property type="match status" value="4"/>
</dbReference>
<dbReference type="InterPro" id="IPR030685">
    <property type="entry name" value="Serotransferrin_mammal"/>
</dbReference>
<dbReference type="InterPro" id="IPR016357">
    <property type="entry name" value="Transferrin"/>
</dbReference>
<dbReference type="InterPro" id="IPR001156">
    <property type="entry name" value="Transferrin-like_dom"/>
</dbReference>
<dbReference type="InterPro" id="IPR018195">
    <property type="entry name" value="Transferrin_Fe_BS"/>
</dbReference>
<dbReference type="PANTHER" id="PTHR11485:SF31">
    <property type="entry name" value="SEROTRANSFERRIN"/>
    <property type="match status" value="1"/>
</dbReference>
<dbReference type="PANTHER" id="PTHR11485">
    <property type="entry name" value="TRANSFERRIN"/>
    <property type="match status" value="1"/>
</dbReference>
<dbReference type="Pfam" id="PF00405">
    <property type="entry name" value="Transferrin"/>
    <property type="match status" value="2"/>
</dbReference>
<dbReference type="PIRSF" id="PIRSF500682">
    <property type="entry name" value="Serotransferrin"/>
    <property type="match status" value="1"/>
</dbReference>
<dbReference type="PIRSF" id="PIRSF002549">
    <property type="entry name" value="Transferrin"/>
    <property type="match status" value="1"/>
</dbReference>
<dbReference type="PRINTS" id="PR00422">
    <property type="entry name" value="TRANSFERRIN"/>
</dbReference>
<dbReference type="SMART" id="SM00094">
    <property type="entry name" value="TR_FER"/>
    <property type="match status" value="2"/>
</dbReference>
<dbReference type="SUPFAM" id="SSF53850">
    <property type="entry name" value="Periplasmic binding protein-like II"/>
    <property type="match status" value="2"/>
</dbReference>
<dbReference type="PROSITE" id="PS00205">
    <property type="entry name" value="TRANSFERRIN_LIKE_1"/>
    <property type="match status" value="2"/>
</dbReference>
<dbReference type="PROSITE" id="PS00206">
    <property type="entry name" value="TRANSFERRIN_LIKE_2"/>
    <property type="match status" value="2"/>
</dbReference>
<dbReference type="PROSITE" id="PS00207">
    <property type="entry name" value="TRANSFERRIN_LIKE_3"/>
    <property type="match status" value="2"/>
</dbReference>
<dbReference type="PROSITE" id="PS51408">
    <property type="entry name" value="TRANSFERRIN_LIKE_4"/>
    <property type="match status" value="2"/>
</dbReference>